<reference key="1">
    <citation type="journal article" date="1987" name="EMBO J.">
        <title>Complementary DNA for human T-cell cyclophilin.</title>
        <authorList>
            <person name="Haendler B."/>
            <person name="Hofer-Warbinek R."/>
            <person name="Hofer E."/>
        </authorList>
    </citation>
    <scope>NUCLEOTIDE SEQUENCE [MRNA] (ISOFORM 1)</scope>
    <source>
        <tissue>Leukemic T-cell</tissue>
    </source>
</reference>
<reference key="2">
    <citation type="journal article" date="1990" name="Eur. J. Biochem.">
        <title>Characterization of the human cyclophilin gene and of related processed pseudogenes.</title>
        <authorList>
            <person name="Haendler B."/>
            <person name="Hofer E."/>
        </authorList>
    </citation>
    <scope>NUCLEOTIDE SEQUENCE [GENOMIC DNA]</scope>
</reference>
<reference key="3">
    <citation type="journal article" date="2004" name="Nat. Genet.">
        <title>Complete sequencing and characterization of 21,243 full-length human cDNAs.</title>
        <authorList>
            <person name="Ota T."/>
            <person name="Suzuki Y."/>
            <person name="Nishikawa T."/>
            <person name="Otsuki T."/>
            <person name="Sugiyama T."/>
            <person name="Irie R."/>
            <person name="Wakamatsu A."/>
            <person name="Hayashi K."/>
            <person name="Sato H."/>
            <person name="Nagai K."/>
            <person name="Kimura K."/>
            <person name="Makita H."/>
            <person name="Sekine M."/>
            <person name="Obayashi M."/>
            <person name="Nishi T."/>
            <person name="Shibahara T."/>
            <person name="Tanaka T."/>
            <person name="Ishii S."/>
            <person name="Yamamoto J."/>
            <person name="Saito K."/>
            <person name="Kawai Y."/>
            <person name="Isono Y."/>
            <person name="Nakamura Y."/>
            <person name="Nagahari K."/>
            <person name="Murakami K."/>
            <person name="Yasuda T."/>
            <person name="Iwayanagi T."/>
            <person name="Wagatsuma M."/>
            <person name="Shiratori A."/>
            <person name="Sudo H."/>
            <person name="Hosoiri T."/>
            <person name="Kaku Y."/>
            <person name="Kodaira H."/>
            <person name="Kondo H."/>
            <person name="Sugawara M."/>
            <person name="Takahashi M."/>
            <person name="Kanda K."/>
            <person name="Yokoi T."/>
            <person name="Furuya T."/>
            <person name="Kikkawa E."/>
            <person name="Omura Y."/>
            <person name="Abe K."/>
            <person name="Kamihara K."/>
            <person name="Katsuta N."/>
            <person name="Sato K."/>
            <person name="Tanikawa M."/>
            <person name="Yamazaki M."/>
            <person name="Ninomiya K."/>
            <person name="Ishibashi T."/>
            <person name="Yamashita H."/>
            <person name="Murakawa K."/>
            <person name="Fujimori K."/>
            <person name="Tanai H."/>
            <person name="Kimata M."/>
            <person name="Watanabe M."/>
            <person name="Hiraoka S."/>
            <person name="Chiba Y."/>
            <person name="Ishida S."/>
            <person name="Ono Y."/>
            <person name="Takiguchi S."/>
            <person name="Watanabe S."/>
            <person name="Yosida M."/>
            <person name="Hotuta T."/>
            <person name="Kusano J."/>
            <person name="Kanehori K."/>
            <person name="Takahashi-Fujii A."/>
            <person name="Hara H."/>
            <person name="Tanase T.-O."/>
            <person name="Nomura Y."/>
            <person name="Togiya S."/>
            <person name="Komai F."/>
            <person name="Hara R."/>
            <person name="Takeuchi K."/>
            <person name="Arita M."/>
            <person name="Imose N."/>
            <person name="Musashino K."/>
            <person name="Yuuki H."/>
            <person name="Oshima A."/>
            <person name="Sasaki N."/>
            <person name="Aotsuka S."/>
            <person name="Yoshikawa Y."/>
            <person name="Matsunawa H."/>
            <person name="Ichihara T."/>
            <person name="Shiohata N."/>
            <person name="Sano S."/>
            <person name="Moriya S."/>
            <person name="Momiyama H."/>
            <person name="Satoh N."/>
            <person name="Takami S."/>
            <person name="Terashima Y."/>
            <person name="Suzuki O."/>
            <person name="Nakagawa S."/>
            <person name="Senoh A."/>
            <person name="Mizoguchi H."/>
            <person name="Goto Y."/>
            <person name="Shimizu F."/>
            <person name="Wakebe H."/>
            <person name="Hishigaki H."/>
            <person name="Watanabe T."/>
            <person name="Sugiyama A."/>
            <person name="Takemoto M."/>
            <person name="Kawakami B."/>
            <person name="Yamazaki M."/>
            <person name="Watanabe K."/>
            <person name="Kumagai A."/>
            <person name="Itakura S."/>
            <person name="Fukuzumi Y."/>
            <person name="Fujimori Y."/>
            <person name="Komiyama M."/>
            <person name="Tashiro H."/>
            <person name="Tanigami A."/>
            <person name="Fujiwara T."/>
            <person name="Ono T."/>
            <person name="Yamada K."/>
            <person name="Fujii Y."/>
            <person name="Ozaki K."/>
            <person name="Hirao M."/>
            <person name="Ohmori Y."/>
            <person name="Kawabata A."/>
            <person name="Hikiji T."/>
            <person name="Kobatake N."/>
            <person name="Inagaki H."/>
            <person name="Ikema Y."/>
            <person name="Okamoto S."/>
            <person name="Okitani R."/>
            <person name="Kawakami T."/>
            <person name="Noguchi S."/>
            <person name="Itoh T."/>
            <person name="Shigeta K."/>
            <person name="Senba T."/>
            <person name="Matsumura K."/>
            <person name="Nakajima Y."/>
            <person name="Mizuno T."/>
            <person name="Morinaga M."/>
            <person name="Sasaki M."/>
            <person name="Togashi T."/>
            <person name="Oyama M."/>
            <person name="Hata H."/>
            <person name="Watanabe M."/>
            <person name="Komatsu T."/>
            <person name="Mizushima-Sugano J."/>
            <person name="Satoh T."/>
            <person name="Shirai Y."/>
            <person name="Takahashi Y."/>
            <person name="Nakagawa K."/>
            <person name="Okumura K."/>
            <person name="Nagase T."/>
            <person name="Nomura N."/>
            <person name="Kikuchi H."/>
            <person name="Masuho Y."/>
            <person name="Yamashita R."/>
            <person name="Nakai K."/>
            <person name="Yada T."/>
            <person name="Nakamura Y."/>
            <person name="Ohara O."/>
            <person name="Isogai T."/>
            <person name="Sugano S."/>
        </authorList>
    </citation>
    <scope>NUCLEOTIDE SEQUENCE [LARGE SCALE MRNA] (ISOFORMS 1 AND 2)</scope>
    <source>
        <tissue>Subthalamic nucleus</tissue>
        <tissue>Trachea</tissue>
    </source>
</reference>
<reference key="4">
    <citation type="submission" date="2004-06" db="EMBL/GenBank/DDBJ databases">
        <title>Cloning of human full open reading frames in Gateway(TM) system entry vector (pDONR201).</title>
        <authorList>
            <person name="Ebert L."/>
            <person name="Schick M."/>
            <person name="Neubert P."/>
            <person name="Schatten R."/>
            <person name="Henze S."/>
            <person name="Korn B."/>
        </authorList>
    </citation>
    <scope>NUCLEOTIDE SEQUENCE [LARGE SCALE MRNA] (ISOFORM 1)</scope>
</reference>
<reference key="5">
    <citation type="journal article" date="2008" name="Nat. Methods">
        <title>Human protein factory for converting the transcriptome into an in vitro-expressed proteome.</title>
        <authorList>
            <person name="Goshima N."/>
            <person name="Kawamura Y."/>
            <person name="Fukumoto A."/>
            <person name="Miura A."/>
            <person name="Honma R."/>
            <person name="Satoh R."/>
            <person name="Wakamatsu A."/>
            <person name="Yamamoto J."/>
            <person name="Kimura K."/>
            <person name="Nishikawa T."/>
            <person name="Andoh T."/>
            <person name="Iida Y."/>
            <person name="Ishikawa K."/>
            <person name="Ito E."/>
            <person name="Kagawa N."/>
            <person name="Kaminaga C."/>
            <person name="Kanehori K."/>
            <person name="Kawakami B."/>
            <person name="Kenmochi K."/>
            <person name="Kimura R."/>
            <person name="Kobayashi M."/>
            <person name="Kuroita T."/>
            <person name="Kuwayama H."/>
            <person name="Maruyama Y."/>
            <person name="Matsuo K."/>
            <person name="Minami K."/>
            <person name="Mitsubori M."/>
            <person name="Mori M."/>
            <person name="Morishita R."/>
            <person name="Murase A."/>
            <person name="Nishikawa A."/>
            <person name="Nishikawa S."/>
            <person name="Okamoto T."/>
            <person name="Sakagami N."/>
            <person name="Sakamoto Y."/>
            <person name="Sasaki Y."/>
            <person name="Seki T."/>
            <person name="Sono S."/>
            <person name="Sugiyama A."/>
            <person name="Sumiya T."/>
            <person name="Takayama T."/>
            <person name="Takayama Y."/>
            <person name="Takeda H."/>
            <person name="Togashi T."/>
            <person name="Yahata K."/>
            <person name="Yamada H."/>
            <person name="Yanagisawa Y."/>
            <person name="Endo Y."/>
            <person name="Imamoto F."/>
            <person name="Kisu Y."/>
            <person name="Tanaka S."/>
            <person name="Isogai T."/>
            <person name="Imai J."/>
            <person name="Watanabe S."/>
            <person name="Nomura N."/>
        </authorList>
    </citation>
    <scope>NUCLEOTIDE SEQUENCE [LARGE SCALE MRNA] (ISOFORM 1)</scope>
</reference>
<reference key="6">
    <citation type="submission" date="2004-08" db="EMBL/GenBank/DDBJ databases">
        <authorList>
            <consortium name="NIEHS SNPs program"/>
        </authorList>
    </citation>
    <scope>NUCLEOTIDE SEQUENCE [GENOMIC DNA]</scope>
</reference>
<reference key="7">
    <citation type="journal article" date="2003" name="Nature">
        <title>The DNA sequence of human chromosome 7.</title>
        <authorList>
            <person name="Hillier L.W."/>
            <person name="Fulton R.S."/>
            <person name="Fulton L.A."/>
            <person name="Graves T.A."/>
            <person name="Pepin K.H."/>
            <person name="Wagner-McPherson C."/>
            <person name="Layman D."/>
            <person name="Maas J."/>
            <person name="Jaeger S."/>
            <person name="Walker R."/>
            <person name="Wylie K."/>
            <person name="Sekhon M."/>
            <person name="Becker M.C."/>
            <person name="O'Laughlin M.D."/>
            <person name="Schaller M.E."/>
            <person name="Fewell G.A."/>
            <person name="Delehaunty K.D."/>
            <person name="Miner T.L."/>
            <person name="Nash W.E."/>
            <person name="Cordes M."/>
            <person name="Du H."/>
            <person name="Sun H."/>
            <person name="Edwards J."/>
            <person name="Bradshaw-Cordum H."/>
            <person name="Ali J."/>
            <person name="Andrews S."/>
            <person name="Isak A."/>
            <person name="Vanbrunt A."/>
            <person name="Nguyen C."/>
            <person name="Du F."/>
            <person name="Lamar B."/>
            <person name="Courtney L."/>
            <person name="Kalicki J."/>
            <person name="Ozersky P."/>
            <person name="Bielicki L."/>
            <person name="Scott K."/>
            <person name="Holmes A."/>
            <person name="Harkins R."/>
            <person name="Harris A."/>
            <person name="Strong C.M."/>
            <person name="Hou S."/>
            <person name="Tomlinson C."/>
            <person name="Dauphin-Kohlberg S."/>
            <person name="Kozlowicz-Reilly A."/>
            <person name="Leonard S."/>
            <person name="Rohlfing T."/>
            <person name="Rock S.M."/>
            <person name="Tin-Wollam A.-M."/>
            <person name="Abbott A."/>
            <person name="Minx P."/>
            <person name="Maupin R."/>
            <person name="Strowmatt C."/>
            <person name="Latreille P."/>
            <person name="Miller N."/>
            <person name="Johnson D."/>
            <person name="Murray J."/>
            <person name="Woessner J.P."/>
            <person name="Wendl M.C."/>
            <person name="Yang S.-P."/>
            <person name="Schultz B.R."/>
            <person name="Wallis J.W."/>
            <person name="Spieth J."/>
            <person name="Bieri T.A."/>
            <person name="Nelson J.O."/>
            <person name="Berkowicz N."/>
            <person name="Wohldmann P.E."/>
            <person name="Cook L.L."/>
            <person name="Hickenbotham M.T."/>
            <person name="Eldred J."/>
            <person name="Williams D."/>
            <person name="Bedell J.A."/>
            <person name="Mardis E.R."/>
            <person name="Clifton S.W."/>
            <person name="Chissoe S.L."/>
            <person name="Marra M.A."/>
            <person name="Raymond C."/>
            <person name="Haugen E."/>
            <person name="Gillett W."/>
            <person name="Zhou Y."/>
            <person name="James R."/>
            <person name="Phelps K."/>
            <person name="Iadanoto S."/>
            <person name="Bubb K."/>
            <person name="Simms E."/>
            <person name="Levy R."/>
            <person name="Clendenning J."/>
            <person name="Kaul R."/>
            <person name="Kent W.J."/>
            <person name="Furey T.S."/>
            <person name="Baertsch R.A."/>
            <person name="Brent M.R."/>
            <person name="Keibler E."/>
            <person name="Flicek P."/>
            <person name="Bork P."/>
            <person name="Suyama M."/>
            <person name="Bailey J.A."/>
            <person name="Portnoy M.E."/>
            <person name="Torrents D."/>
            <person name="Chinwalla A.T."/>
            <person name="Gish W.R."/>
            <person name="Eddy S.R."/>
            <person name="McPherson J.D."/>
            <person name="Olson M.V."/>
            <person name="Eichler E.E."/>
            <person name="Green E.D."/>
            <person name="Waterston R.H."/>
            <person name="Wilson R.K."/>
        </authorList>
    </citation>
    <scope>NUCLEOTIDE SEQUENCE [LARGE SCALE GENOMIC DNA]</scope>
</reference>
<reference key="8">
    <citation type="journal article" date="2004" name="Genome Res.">
        <title>The status, quality, and expansion of the NIH full-length cDNA project: the Mammalian Gene Collection (MGC).</title>
        <authorList>
            <consortium name="The MGC Project Team"/>
        </authorList>
    </citation>
    <scope>NUCLEOTIDE SEQUENCE [LARGE SCALE MRNA] (ISOFORMS 1 AND 2)</scope>
    <source>
        <tissue>Blood</tissue>
        <tissue>Bone marrow</tissue>
        <tissue>Brain</tissue>
        <tissue>Cervix</tissue>
        <tissue>Colon</tissue>
        <tissue>Lung</tissue>
        <tissue>Skeletal muscle</tissue>
        <tissue>Skin</tissue>
        <tissue>Urinary bladder</tissue>
    </source>
</reference>
<reference key="9">
    <citation type="journal article" date="1995" name="Hum. Reprod.">
        <title>Identification of cyclophilin A from human decidual and placental tissue in the first trimester of pregnancy.</title>
        <authorList>
            <person name="Meier U."/>
            <person name="Beier-Hellwig K."/>
            <person name="Klug J."/>
            <person name="Linder D."/>
            <person name="Beier H.M."/>
        </authorList>
    </citation>
    <scope>PROTEIN SEQUENCE OF 2-30</scope>
</reference>
<reference key="10">
    <citation type="journal article" date="2003" name="Nat. Biotechnol.">
        <title>Exploring proteomes and analyzing protein processing by mass spectrometric identification of sorted N-terminal peptides.</title>
        <authorList>
            <person name="Gevaert K."/>
            <person name="Goethals M."/>
            <person name="Martens L."/>
            <person name="Van Damme J."/>
            <person name="Staes A."/>
            <person name="Thomas G.R."/>
            <person name="Vandekerckhove J."/>
        </authorList>
    </citation>
    <scope>PROTEIN SEQUENCE OF 2-19</scope>
    <source>
        <tissue>Platelet</tissue>
    </source>
</reference>
<reference key="11">
    <citation type="submission" date="2008-12" db="UniProtKB">
        <authorList>
            <person name="Lubec G."/>
            <person name="Afjehi-Sadat L."/>
            <person name="Chen W.-Q."/>
            <person name="Sun Y."/>
        </authorList>
    </citation>
    <scope>PROTEIN SEQUENCE OF 2-31; 56-69; 77-118; 132-144 AND 155-165</scope>
    <scope>IDENTIFICATION BY MASS SPECTROMETRY</scope>
    <source>
        <tissue>Brain</tissue>
        <tissue>Cajal-Retzius cell</tissue>
        <tissue>Fetal brain cortex</tissue>
    </source>
</reference>
<reference key="12">
    <citation type="submission" date="2005-11" db="UniProtKB">
        <authorList>
            <person name="Bienvenut W.V."/>
            <person name="Claeys D."/>
        </authorList>
    </citation>
    <scope>PROTEIN SEQUENCE OF 2-28</scope>
    <scope>CLEAVAGE OF INITIATOR METHIONINE</scope>
    <scope>ACETYLATION AT VAL-2</scope>
    <scope>IDENTIFICATION BY MASS SPECTROMETRY</scope>
    <source>
        <tissue>Platelet</tissue>
    </source>
</reference>
<reference key="13">
    <citation type="journal article" date="1991" name="Biochemistry">
        <title>Human and Escherichia coli cyclophilins: sensitivity to inhibition by the immunosuppressant cyclosporin A correlates with a specific tryptophan residue.</title>
        <authorList>
            <person name="Liu J."/>
            <person name="Chen C.-M."/>
            <person name="Walsh C.T."/>
        </authorList>
    </citation>
    <scope>FUNCTION</scope>
    <scope>CATALYTIC ACTIVITY</scope>
    <scope>ACTIVITY REGULATION</scope>
    <scope>MUTAGENESIS OF TRP-121</scope>
</reference>
<reference key="14">
    <citation type="journal article" date="1993" name="Cell">
        <title>Human immunodeficiency virus type 1 Gag protein binds to cyclophilins A and B.</title>
        <authorList>
            <person name="Luban J."/>
            <person name="Bossolt K.L."/>
            <person name="Franke E.K."/>
            <person name="Kalpana G.V."/>
            <person name="Goff S.P."/>
        </authorList>
    </citation>
    <scope>INTERACTION WITH HIV-1 CAPSID PROTEIN (MICROBIAL INFECTION)</scope>
</reference>
<reference key="15">
    <citation type="journal article" date="2001" name="Proc. Natl. Acad. Sci. U.S.A.">
        <title>CD147 facilitates HIV-1 infection by interacting with virus-associated cyclophilin A.</title>
        <authorList>
            <person name="Pushkarsky T."/>
            <person name="Zybarth G."/>
            <person name="Dubrovsky L."/>
            <person name="Yurchenko V."/>
            <person name="Tang H."/>
            <person name="Guo H."/>
            <person name="Toole B."/>
            <person name="Sherry B."/>
            <person name="Bukrinsky M."/>
        </authorList>
    </citation>
    <scope>INTERACTION WITH BSG</scope>
</reference>
<reference key="16">
    <citation type="journal article" date="2002" name="J. Biol. Chem.">
        <title>Active site residues of cyclophilin A are crucial for its signaling activity via CD147.</title>
        <authorList>
            <person name="Yurchenko V."/>
            <person name="Zybarth G."/>
            <person name="O'Connor M."/>
            <person name="Dai W.W."/>
            <person name="Franchin G."/>
            <person name="Hao T."/>
            <person name="Guo H."/>
            <person name="Hung H.C."/>
            <person name="Toole B."/>
            <person name="Gallay P."/>
            <person name="Sherry B."/>
            <person name="Bukrinsky M."/>
        </authorList>
    </citation>
    <scope>FUNCTION</scope>
    <scope>INTERACTION WITH BSG</scope>
    <scope>MUTAGENESIS OF PHE-60; PHE-113; TRP-121 AND HIS-126</scope>
</reference>
<reference key="17">
    <citation type="journal article" date="2003" name="Nature">
        <title>Proteomic characterization of the human centrosome by protein correlation profiling.</title>
        <authorList>
            <person name="Andersen J.S."/>
            <person name="Wilkinson C.J."/>
            <person name="Mayor T."/>
            <person name="Mortensen P."/>
            <person name="Nigg E.A."/>
            <person name="Mann M."/>
        </authorList>
    </citation>
    <scope>IDENTIFICATION BY MASS SPECTROMETRY</scope>
    <source>
        <tissue>Lymphoblast</tissue>
    </source>
</reference>
<reference key="18">
    <citation type="journal article" date="2004" name="Arterioscler. Thromb. Vasc. Biol.">
        <title>Cyclophilin A is a proinflammatory cytokine that activates endothelial cells.</title>
        <authorList>
            <person name="Jin Z.G."/>
            <person name="Lungu A.O."/>
            <person name="Xie L."/>
            <person name="Wang M."/>
            <person name="Wong C."/>
            <person name="Berk B.C."/>
        </authorList>
    </citation>
    <scope>FUNCTION</scope>
</reference>
<reference key="19">
    <citation type="journal article" date="2005" name="J. Infect. Dis.">
        <title>Function of HAb18G/CD147 in invasion of host cells by severe acute respiratory syndrome coronavirus.</title>
        <authorList>
            <person name="Chen Z."/>
            <person name="Mi L."/>
            <person name="Xu J."/>
            <person name="Yu J."/>
            <person name="Wang X."/>
            <person name="Jiang J."/>
            <person name="Xing J."/>
            <person name="Shang P."/>
            <person name="Qian A."/>
            <person name="Li Y."/>
            <person name="Shaw P.X."/>
            <person name="Wang J."/>
            <person name="Duan S."/>
            <person name="Ding J."/>
            <person name="Fan C."/>
            <person name="Zhang Y."/>
            <person name="Yang Y."/>
            <person name="Yu X."/>
            <person name="Feng Q."/>
            <person name="Li B."/>
            <person name="Yao X."/>
            <person name="Zhang Z."/>
            <person name="Li L."/>
            <person name="Xue X."/>
            <person name="Zhu P."/>
        </authorList>
    </citation>
    <scope>FUNCTION (MICROBIAL INFECTION)</scope>
    <scope>INTERACTION WITH BSG</scope>
    <scope>INTERACTION WITH SARS-COV NUCLEOPROTEIN (MICROBIAL INFECTION)</scope>
</reference>
<reference key="20">
    <citation type="journal article" date="2006" name="Circ. Res.">
        <title>Cyclophilin A is secreted by a vesicular pathway in vascular smooth muscle cells.</title>
        <authorList>
            <person name="Suzuki J."/>
            <person name="Jin Z.G."/>
            <person name="Meoli D.F."/>
            <person name="Matoba T."/>
            <person name="Berk B.C."/>
        </authorList>
    </citation>
    <scope>SUBCELLULAR LOCATION</scope>
</reference>
<reference key="21">
    <citation type="journal article" date="2009" name="Anal. Chem.">
        <title>Lys-N and trypsin cover complementary parts of the phosphoproteome in a refined SCX-based approach.</title>
        <authorList>
            <person name="Gauci S."/>
            <person name="Helbig A.O."/>
            <person name="Slijper M."/>
            <person name="Krijgsveld J."/>
            <person name="Heck A.J."/>
            <person name="Mohammed S."/>
        </authorList>
    </citation>
    <scope>ACETYLATION [LARGE SCALE ANALYSIS] AT MET-1 AND VAL-2</scope>
    <scope>CLEAVAGE OF INITIATOR METHIONINE [LARGE SCALE ANALYSIS]</scope>
    <scope>IDENTIFICATION BY MASS SPECTROMETRY [LARGE SCALE ANALYSIS]</scope>
</reference>
<reference key="22">
    <citation type="journal article" date="2009" name="Cell. Microbiol.">
        <title>Cyclophilin A interacts with influenza A virus M1 protein and impairs the early stage of the viral replication.</title>
        <authorList>
            <person name="Liu X."/>
            <person name="Sun L."/>
            <person name="Yu M."/>
            <person name="Wang Z."/>
            <person name="Xu C."/>
            <person name="Xue Q."/>
            <person name="Zhang K."/>
            <person name="Ye X."/>
            <person name="Kitamura Y."/>
            <person name="Liu W."/>
        </authorList>
    </citation>
    <scope>FUNCTION</scope>
    <scope>INTERACTION WITH INFLUENZA A VIRUS MATRIX PROTEIN 1 (MICROBIAL INFECTION)</scope>
    <scope>CATALYTIC ACTIVITY</scope>
    <scope>MUTAGENESIS OF ARG-55</scope>
</reference>
<reference key="23">
    <citation type="journal article" date="2009" name="Science">
        <title>Lysine acetylation targets protein complexes and co-regulates major cellular functions.</title>
        <authorList>
            <person name="Choudhary C."/>
            <person name="Kumar C."/>
            <person name="Gnad F."/>
            <person name="Nielsen M.L."/>
            <person name="Rehman M."/>
            <person name="Walther T.C."/>
            <person name="Olsen J.V."/>
            <person name="Mann M."/>
        </authorList>
    </citation>
    <scope>ACETYLATION [LARGE SCALE ANALYSIS] AT LYS-28; LYS-44; LYS-76; LYS-82; LYS-125 AND LYS-131</scope>
    <scope>IDENTIFICATION BY MASS SPECTROMETRY [LARGE SCALE ANALYSIS]</scope>
</reference>
<reference key="24">
    <citation type="journal article" date="2010" name="J. Virol.">
        <title>CD147/EMMPRIN acts as a functional entry receptor for measles virus on epithelial cells.</title>
        <authorList>
            <person name="Watanabe A."/>
            <person name="Yoneda M."/>
            <person name="Ikeda F."/>
            <person name="Terao-Muto Y."/>
            <person name="Sato H."/>
            <person name="Kai C."/>
        </authorList>
    </citation>
    <scope>INTERACTION WITH MEASLES VIRUS NUCLEOPROTEIN (MICROBIAL INFECTION)</scope>
</reference>
<reference key="25">
    <citation type="journal article" date="2010" name="PLoS Biol.">
        <title>Structural and biochemical characterization of the human cyclophilin family of peptidyl-prolyl isomerases.</title>
        <authorList>
            <person name="Davis T.L."/>
            <person name="Walker J.R."/>
            <person name="Campagna-Slater V."/>
            <person name="Finerty P.J."/>
            <person name="Paramanathan R."/>
            <person name="Bernstein G."/>
            <person name="MacKenzie F."/>
            <person name="Tempel W."/>
            <person name="Ouyang H."/>
            <person name="Lee W.H."/>
            <person name="Eisenmesser E.Z."/>
            <person name="Dhe-Paganon S."/>
        </authorList>
    </citation>
    <scope>FUNCTION</scope>
    <scope>CATALYTIC ACTIVITY</scope>
    <scope>MUTAGENESIS OF TRP-121</scope>
</reference>
<reference key="26">
    <citation type="journal article" date="2010" name="Sci. Signal.">
        <title>Quantitative phosphoproteomics reveals widespread full phosphorylation site occupancy during mitosis.</title>
        <authorList>
            <person name="Olsen J.V."/>
            <person name="Vermeulen M."/>
            <person name="Santamaria A."/>
            <person name="Kumar C."/>
            <person name="Miller M.L."/>
            <person name="Jensen L.J."/>
            <person name="Gnad F."/>
            <person name="Cox J."/>
            <person name="Jensen T.S."/>
            <person name="Nigg E.A."/>
            <person name="Brunak S."/>
            <person name="Mann M."/>
        </authorList>
    </citation>
    <scope>PHOSPHORYLATION [LARGE SCALE ANALYSIS] AT THR-93</scope>
    <scope>IDENTIFICATION BY MASS SPECTROMETRY [LARGE SCALE ANALYSIS]</scope>
    <source>
        <tissue>Cervix carcinoma</tissue>
    </source>
</reference>
<reference key="27">
    <citation type="journal article" date="2011" name="BMC Syst. Biol.">
        <title>Initial characterization of the human central proteome.</title>
        <authorList>
            <person name="Burkard T.R."/>
            <person name="Planyavsky M."/>
            <person name="Kaupe I."/>
            <person name="Breitwieser F.P."/>
            <person name="Buerckstuemmer T."/>
            <person name="Bennett K.L."/>
            <person name="Superti-Furga G."/>
            <person name="Colinge J."/>
        </authorList>
    </citation>
    <scope>IDENTIFICATION BY MASS SPECTROMETRY [LARGE SCALE ANALYSIS]</scope>
</reference>
<reference key="28">
    <citation type="journal article" date="2011" name="J. Biol. Chem.">
        <title>Cyclophilin A (CyPA) induces chemotaxis independent of its peptidylprolyl cis-trans isomerase activity: direct binding between CyPA and the ectodomain of CD147.</title>
        <authorList>
            <person name="Song F."/>
            <person name="Zhang X."/>
            <person name="Ren X.B."/>
            <person name="Zhu P."/>
            <person name="Xu J."/>
            <person name="Wang L."/>
            <person name="Li Y.F."/>
            <person name="Zhong N."/>
            <person name="Ru Q."/>
            <person name="Zhang D.W."/>
            <person name="Jiang J.L."/>
            <person name="Xia B."/>
            <person name="Chen Z.N."/>
        </authorList>
    </citation>
    <scope>FUNCTION</scope>
    <scope>CATALYTIC ACTIVITY</scope>
    <scope>INTERACTION WITH BSG</scope>
    <scope>MUTAGENESIS OF ARG-55; ARG-69; HIS-70 AND THR-107</scope>
</reference>
<reference key="29">
    <citation type="journal article" date="2011" name="J. Virol.">
        <title>Cyclophilin A interacts with domain II of hepatitis C virus NS5A and stimulates RNA binding in an isomerase-dependent manner.</title>
        <authorList>
            <person name="Foster T.L."/>
            <person name="Gallay P."/>
            <person name="Stonehouse N.J."/>
            <person name="Harris M."/>
        </authorList>
    </citation>
    <scope>FUNCTION (MICROBIAL INFECTION)</scope>
    <scope>INTERACTION WITH HCV NS5A (MICROBIAL INFECTION)</scope>
    <scope>CATALYTIC ACTIVITY</scope>
    <scope>MUTAGENESIS OF HIS-126</scope>
</reference>
<reference key="30">
    <citation type="journal article" date="2012" name="Mol. Cell. Proteomics">
        <title>Comparative large-scale characterisation of plant vs. mammal proteins reveals similar and idiosyncratic N-alpha acetylation features.</title>
        <authorList>
            <person name="Bienvenut W.V."/>
            <person name="Sumpton D."/>
            <person name="Martinez A."/>
            <person name="Lilla S."/>
            <person name="Espagne C."/>
            <person name="Meinnel T."/>
            <person name="Giglione C."/>
        </authorList>
    </citation>
    <scope>ACETYLATION [LARGE SCALE ANALYSIS] AT MET-1</scope>
    <scope>CLEAVAGE OF INITIATOR METHIONINE [LARGE SCALE ANALYSIS]</scope>
    <scope>IDENTIFICATION BY MASS SPECTROMETRY [LARGE SCALE ANALYSIS]</scope>
</reference>
<reference key="31">
    <citation type="journal article" date="2012" name="PLoS ONE">
        <title>Cyclophilin A restricts influenza A virus replication through degradation of the M1 protein.</title>
        <authorList>
            <person name="Liu X."/>
            <person name="Zhao Z."/>
            <person name="Xu C."/>
            <person name="Sun L."/>
            <person name="Chen J."/>
            <person name="Zhang L."/>
            <person name="Liu W."/>
        </authorList>
    </citation>
    <scope>FUNCTION</scope>
</reference>
<reference key="32">
    <citation type="journal article" date="2012" name="Proc. Natl. Acad. Sci. U.S.A.">
        <title>N-terminal acetylome analyses and functional insights of the N-terminal acetyltransferase NatB.</title>
        <authorList>
            <person name="Van Damme P."/>
            <person name="Lasa M."/>
            <person name="Polevoda B."/>
            <person name="Gazquez C."/>
            <person name="Elosegui-Artola A."/>
            <person name="Kim D.S."/>
            <person name="De Juan-Pardo E."/>
            <person name="Demeyer K."/>
            <person name="Hole K."/>
            <person name="Larrea E."/>
            <person name="Timmerman E."/>
            <person name="Prieto J."/>
            <person name="Arnesen T."/>
            <person name="Sherman F."/>
            <person name="Gevaert K."/>
            <person name="Aldabe R."/>
        </authorList>
    </citation>
    <scope>ACETYLATION [LARGE SCALE ANALYSIS] AT MET-1</scope>
    <scope>IDENTIFICATION BY MASS SPECTROMETRY [LARGE SCALE ANALYSIS]</scope>
</reference>
<reference key="33">
    <citation type="journal article" date="2013" name="Inflammation">
        <title>Antiapoptotic and proapoptotic signaling of cyclophilin A in endothelial cells.</title>
        <authorList>
            <person name="Wei Y."/>
            <person name="Jinchuan Y."/>
            <person name="Yi L."/>
            <person name="Jun W."/>
            <person name="Zhongqun W."/>
            <person name="Cuiping W."/>
        </authorList>
    </citation>
    <scope>FUNCTION</scope>
</reference>
<reference key="34">
    <citation type="journal article" date="2013" name="J. Proteome Res.">
        <title>Toward a comprehensive characterization of a human cancer cell phosphoproteome.</title>
        <authorList>
            <person name="Zhou H."/>
            <person name="Di Palma S."/>
            <person name="Preisinger C."/>
            <person name="Peng M."/>
            <person name="Polat A.N."/>
            <person name="Heck A.J."/>
            <person name="Mohammed S."/>
        </authorList>
    </citation>
    <scope>PHOSPHORYLATION [LARGE SCALE ANALYSIS] AT SER-77</scope>
    <scope>IDENTIFICATION BY MASS SPECTROMETRY [LARGE SCALE ANALYSIS]</scope>
    <source>
        <tissue>Erythroleukemia</tissue>
    </source>
</reference>
<reference key="35">
    <citation type="journal article" date="2014" name="J. Proteomics">
        <title>An enzyme assisted RP-RPLC approach for in-depth analysis of human liver phosphoproteome.</title>
        <authorList>
            <person name="Bian Y."/>
            <person name="Song C."/>
            <person name="Cheng K."/>
            <person name="Dong M."/>
            <person name="Wang F."/>
            <person name="Huang J."/>
            <person name="Sun D."/>
            <person name="Wang L."/>
            <person name="Ye M."/>
            <person name="Zou H."/>
        </authorList>
    </citation>
    <scope>IDENTIFICATION BY MASS SPECTROMETRY [LARGE SCALE ANALYSIS]</scope>
    <source>
        <tissue>Liver</tissue>
    </source>
</reference>
<reference key="36">
    <citation type="journal article" date="2015" name="Biochem. Biophys. Res. Commun.">
        <title>Cyclophilin A regulates JNK/p38-MAPK signaling through its physical interaction with ASK1.</title>
        <authorList>
            <person name="Kim H."/>
            <person name="Oh Y."/>
            <person name="Kim K."/>
            <person name="Jeong S."/>
            <person name="Chon S."/>
            <person name="Kim D."/>
            <person name="Jung M.H."/>
            <person name="Pak Y.K."/>
            <person name="Ha J."/>
            <person name="Kang I."/>
            <person name="Choe W."/>
        </authorList>
    </citation>
    <scope>FUNCTION</scope>
    <scope>CATALYTIC ACTIVITY</scope>
    <scope>SUBCELLULAR LOCATION</scope>
    <scope>INTERACTION WITH MAP3K5</scope>
    <scope>MUTAGENESIS OF ARG-55</scope>
</reference>
<reference key="37">
    <citation type="journal article" date="2015" name="Brain">
        <title>Peptidylprolyl isomerase A governs TARDBP function and assembly in heterogeneous nuclear ribonucleoprotein complexes.</title>
        <authorList>
            <person name="Lauranzano E."/>
            <person name="Pozzi S."/>
            <person name="Pasetto L."/>
            <person name="Stucchi R."/>
            <person name="Massignan T."/>
            <person name="Paolella K."/>
            <person name="Mombrini M."/>
            <person name="Nardo G."/>
            <person name="Lunetta C."/>
            <person name="Corbo M."/>
            <person name="Mora G."/>
            <person name="Bendotti C."/>
            <person name="Bonetto V."/>
        </authorList>
    </citation>
    <scope>FUNCTION</scope>
    <scope>CATALYTIC ACTIVITY</scope>
    <scope>INTERACTION WITH TARDBP; HNRNPA1; HNRNPA2B1; HNRNPC; RBMX; HNRNPK AND HNRNPM</scope>
    <scope>SUBCELLULAR LOCATION</scope>
    <scope>ACETYLATION AT LYS-125</scope>
    <scope>MUTAGENESIS OF ARG-55 AND LYS-125</scope>
</reference>
<reference key="38">
    <citation type="journal article" date="2015" name="Hum. Mol. Genet.">
        <title>Biochemical and cellular analysis of Ogden syndrome reveals downstream Nt-acetylation defects.</title>
        <authorList>
            <person name="Myklebust L.M."/>
            <person name="Van Damme P."/>
            <person name="Stoeve S.I."/>
            <person name="Doerfel M.J."/>
            <person name="Abboud A."/>
            <person name="Kalvik T.V."/>
            <person name="Grauffel C."/>
            <person name="Jonckheere V."/>
            <person name="Wu Y."/>
            <person name="Swensen J."/>
            <person name="Kaasa H."/>
            <person name="Liszczak G."/>
            <person name="Marmorstein R."/>
            <person name="Reuter N."/>
            <person name="Lyon G.J."/>
            <person name="Gevaert K."/>
            <person name="Arnesen T."/>
        </authorList>
    </citation>
    <scope>ACETYLATION AT VAL-2</scope>
    <scope>CLEAVAGE OF INITIATOR METHIONINE</scope>
</reference>
<reference key="39">
    <citation type="journal article" date="2015" name="Proteomics">
        <title>N-terminome analysis of the human mitochondrial proteome.</title>
        <authorList>
            <person name="Vaca Jacome A.S."/>
            <person name="Rabilloud T."/>
            <person name="Schaeffer-Reiss C."/>
            <person name="Rompais M."/>
            <person name="Ayoub D."/>
            <person name="Lane L."/>
            <person name="Bairoch A."/>
            <person name="Van Dorsselaer A."/>
            <person name="Carapito C."/>
        </authorList>
    </citation>
    <scope>ACETYLATION [LARGE SCALE ANALYSIS] AT MET-1 AND VAL-2</scope>
    <scope>CLEAVAGE OF INITIATOR METHIONINE [LARGE SCALE ANALYSIS]</scope>
    <scope>IDENTIFICATION BY MASS SPECTROMETRY [LARGE SCALE ANALYSIS]</scope>
</reference>
<reference key="40">
    <citation type="journal article" date="2017" name="Nat. Struct. Mol. Biol.">
        <title>Site-specific mapping of the human SUMO proteome reveals co-modification with phosphorylation.</title>
        <authorList>
            <person name="Hendriks I.A."/>
            <person name="Lyon D."/>
            <person name="Young C."/>
            <person name="Jensen L.J."/>
            <person name="Vertegaal A.C."/>
            <person name="Nielsen M.L."/>
        </authorList>
    </citation>
    <scope>SUMOYLATION [LARGE SCALE ANALYSIS] AT LYS-28 AND LYS-82</scope>
    <scope>IDENTIFICATION BY MASS SPECTROMETRY [LARGE SCALE ANALYSIS]</scope>
</reference>
<reference key="41">
    <citation type="journal article" date="2018" name="Virol. Sin.">
        <title>CypA Regulates AIP4-Mediated M1 Ubiquitination of Influenza A Virus.</title>
        <authorList>
            <person name="Mahesutihan M."/>
            <person name="Zheng W."/>
            <person name="Cui L."/>
            <person name="Li Y."/>
            <person name="Jiao P."/>
            <person name="Yang W."/>
            <person name="Liu W."/>
            <person name="Li J."/>
            <person name="Fan W."/>
            <person name="Yang L."/>
            <person name="Liu W."/>
            <person name="Sun L."/>
        </authorList>
    </citation>
    <scope>FUNCTION</scope>
</reference>
<reference key="42">
    <citation type="journal article" date="2019" name="Cell. Signal.">
        <title>Cyclophilin A-FoxO1 signaling pathway in endothelial cell apoptosis.</title>
        <authorList>
            <person name="Xie Y."/>
            <person name="Li X."/>
            <person name="Ge J."/>
        </authorList>
    </citation>
    <scope>FUNCTION</scope>
    <scope>INTERACTION WITH FOXO1</scope>
</reference>
<reference key="43">
    <citation type="journal article" date="1991" name="Nature">
        <title>Structure of human cyclophilin and its binding site for cyclosporin A determined by X-ray crystallography and NMR spectroscopy.</title>
        <authorList>
            <person name="Kallen J."/>
            <person name="Spitzfaden C."/>
            <person name="Zurini M.G.M."/>
            <person name="Wider G."/>
            <person name="Widmer H."/>
            <person name="Wuethrich K."/>
            <person name="Walkinshaw M.D."/>
        </authorList>
    </citation>
    <scope>X-RAY CRYSTALLOGRAPHY (2.6 ANGSTROMS)</scope>
    <scope>STRUCTURE BY NMR</scope>
</reference>
<reference key="44">
    <citation type="journal article" date="1991" name="Proc. Natl. Acad. Sci. U.S.A.">
        <title>Crystal structure of recombinant human T-cell cyclophilin A at 2.5-A resolution.</title>
        <authorList>
            <person name="Ke H."/>
            <person name="Zydowsky L.D."/>
            <person name="Liu J."/>
            <person name="Walsh C.T."/>
        </authorList>
    </citation>
    <scope>X-RAY CRYSTALLOGRAPHY (2.5 ANGSTROMS)</scope>
</reference>
<reference key="45">
    <citation type="journal article" date="1993" name="Nature">
        <title>X-ray structure of a decameric cyclophilin-cyclosporin crystal complex.</title>
        <authorList>
            <person name="Pfuegl G."/>
            <person name="Kallen J."/>
            <person name="Schirmer T."/>
            <person name="Jansonius J.N."/>
            <person name="Zurini M.G.M."/>
            <person name="Walkinshaw M.D."/>
        </authorList>
    </citation>
    <scope>X-RAY CRYSTALLOGRAPHY (2.8 ANGSTROMS) OF COMPLEX WITH CYCLOPHILIN</scope>
</reference>
<reference key="46">
    <citation type="journal article" date="1993" name="J. Mol. Biol.">
        <title>X-ray structure of a monomeric cyclophilin A-cyclosporin A crystal complex at 2.1-A resolution.</title>
        <authorList>
            <person name="Mikol V."/>
            <person name="Kallen J."/>
            <person name="Pfluegl G."/>
            <person name="Walkinshaw M.D."/>
        </authorList>
    </citation>
    <scope>X-RAY CRYSTALLOGRAPHY (2.1 ANGSTROMS)</scope>
</reference>
<reference key="47">
    <citation type="journal article" date="1996" name="Biochemistry">
        <title>Crystal structure implies that cyclophilin predominantly catalyzes the trans to cis isomerization.</title>
        <authorList>
            <person name="Zhao Y."/>
            <person name="Ke H."/>
        </authorList>
    </citation>
    <scope>X-RAY CRYSTALLOGRAPHY (2.4 ANGSTROMS)</scope>
</reference>
<reference key="48">
    <citation type="journal article" date="1997" name="Protein Sci.">
        <title>Crystal structure of cyclophilin A complexed with a binding site peptide from the HIV-1 capsid protein.</title>
        <authorList>
            <person name="Vajdos F.F."/>
            <person name="Yoo S."/>
            <person name="Houseweart M."/>
            <person name="Sundquist W.I."/>
            <person name="Hill C.P."/>
        </authorList>
    </citation>
    <scope>X-RAY CRYSTALLOGRAPHY (1.58 ANGSTROMS)</scope>
</reference>
<reference key="49">
    <citation type="journal article" date="1998" name="J. Mol. Biol.">
        <title>X-ray structures and analysis of 11 cyclosporin derivatives complexed with cyclophilin A.</title>
        <authorList>
            <person name="Kallen J."/>
            <person name="Mikol V."/>
            <person name="Taylor P."/>
            <person name="Walkinshaw M.D."/>
        </authorList>
    </citation>
    <scope>X-RAY CRYSTALLOGRAPHY (1.8 ANGSTROMS)</scope>
</reference>
<reference key="50">
    <citation type="journal article" date="2002" name="Proc. Natl. Acad. Sci. U.S.A.">
        <title>Crystal structure of calcineurin-cyclophilin-cyclosporin shows common but distinct recognition of immunophilin-drug complexes.</title>
        <authorList>
            <person name="Huai Q."/>
            <person name="Kim H.Y."/>
            <person name="Liu Y."/>
            <person name="Zhao Y."/>
            <person name="Mondragon A."/>
            <person name="Liu J.O."/>
            <person name="Ke H."/>
        </authorList>
    </citation>
    <scope>X-RAY CRYSTALLOGRAPHY (2.8 ANGSTROMS) IN COMPLEX WITH PPP3CA</scope>
</reference>
<reference key="51">
    <citation type="journal article" date="2002" name="Proc. Natl. Acad. Sci. U.S.A.">
        <title>Crystal structure of human calcineurin complexed with cyclosporin A and human cyclophilin.</title>
        <authorList>
            <person name="Jin L."/>
            <person name="Harrison S.C."/>
        </authorList>
    </citation>
    <scope>X-RAY CRYSTALLOGRAPHY (3.1 ANGSTROMS) IN COMPLEX WITH PPP3CA</scope>
</reference>
<reference key="52">
    <citation type="journal article" date="1993" name="Nature">
        <title>Solution structure of the cyclosporin A/cyclophilin complex by NMR.</title>
        <authorList>
            <person name="Theriault Y."/>
            <person name="Logan T.M."/>
            <person name="Meadows R."/>
            <person name="Yu L."/>
            <person name="Olejniczak E.T."/>
            <person name="Holzman T.F."/>
            <person name="Simmer R.L."/>
            <person name="Fesik S.W."/>
        </authorList>
    </citation>
    <scope>STRUCTURE BY NMR OF COMPLEX WITH CYCLOPHILIN</scope>
</reference>
<reference key="53">
    <citation type="journal article" date="1997" name="J. Mol. Biol.">
        <title>The NMR solution conformation of unligated human cyclophilin A.</title>
        <authorList>
            <person name="Ottiger M."/>
            <person name="Zerbe O."/>
            <person name="Guentert P."/>
            <person name="Wuethrich K."/>
        </authorList>
    </citation>
    <scope>STRUCTURE BY NMR</scope>
</reference>
<reference key="54">
    <citation type="journal article" date="2010" name="Nat. Chem. Biol.">
        <title>Acetylation regulates cyclophilin A catalysis, immunosuppression and HIV isomerization.</title>
        <authorList>
            <person name="Lammers M."/>
            <person name="Neumann H."/>
            <person name="Chin J.W."/>
            <person name="James L.C."/>
        </authorList>
    </citation>
    <scope>X-RAY CRYSTALLOGRAPHY (1.2 ANGSTROMS) ALONE AND IN COMPLEX WITH CYCLOSPORINE AND HIV-1 CAPSID</scope>
    <scope>ACETYLATION AT LYS-125</scope>
</reference>
<sequence>MVNPTVFFDIAVDGEPLGRVSFELFADKVPKTAENFRALSTGEKGFGYKGSCFHRIIPGFMCQGGDFTRHNGTGGKSIYGEKFEDENFILKHTGPGILSMANAGPNTNGSQFFICTAKTEWLDGKHVVFGKVKEGMNIVEAMERFGSRNGKTSKKITIADCGQLE</sequence>
<organism>
    <name type="scientific">Homo sapiens</name>
    <name type="common">Human</name>
    <dbReference type="NCBI Taxonomy" id="9606"/>
    <lineage>
        <taxon>Eukaryota</taxon>
        <taxon>Metazoa</taxon>
        <taxon>Chordata</taxon>
        <taxon>Craniata</taxon>
        <taxon>Vertebrata</taxon>
        <taxon>Euteleostomi</taxon>
        <taxon>Mammalia</taxon>
        <taxon>Eutheria</taxon>
        <taxon>Euarchontoglires</taxon>
        <taxon>Primates</taxon>
        <taxon>Haplorrhini</taxon>
        <taxon>Catarrhini</taxon>
        <taxon>Hominidae</taxon>
        <taxon>Homo</taxon>
    </lineage>
</organism>
<accession>P62937</accession>
<accession>A8K220</accession>
<accession>P05092</accession>
<accession>Q3KQW3</accession>
<accession>Q567Q0</accession>
<accession>Q6IBU5</accession>
<accession>Q96IX3</accession>
<accession>Q9BRU4</accession>
<accession>Q9BTY9</accession>
<accession>Q9UC61</accession>
<protein>
    <recommendedName>
        <fullName>Peptidyl-prolyl cis-trans isomerase A</fullName>
        <shortName>PPIase A</shortName>
        <ecNumber evidence="13 16 17 18 22 33 34">5.2.1.8</ecNumber>
    </recommendedName>
    <alternativeName>
        <fullName>Cyclophilin A</fullName>
    </alternativeName>
    <alternativeName>
        <fullName>Cyclosporin A-binding protein</fullName>
    </alternativeName>
    <alternativeName>
        <fullName>Rotamase A</fullName>
    </alternativeName>
    <component>
        <recommendedName>
            <fullName>Peptidyl-prolyl cis-trans isomerase A, N-terminally processed</fullName>
        </recommendedName>
    </component>
</protein>
<keyword id="KW-0002">3D-structure</keyword>
<keyword id="KW-0007">Acetylation</keyword>
<keyword id="KW-0025">Alternative splicing</keyword>
<keyword id="KW-0053">Apoptosis</keyword>
<keyword id="KW-0963">Cytoplasm</keyword>
<keyword id="KW-0903">Direct protein sequencing</keyword>
<keyword id="KW-0325">Glycoprotein</keyword>
<keyword id="KW-0945">Host-virus interaction</keyword>
<keyword id="KW-0413">Isomerase</keyword>
<keyword id="KW-1017">Isopeptide bond</keyword>
<keyword id="KW-0539">Nucleus</keyword>
<keyword id="KW-0597">Phosphoprotein</keyword>
<keyword id="KW-1267">Proteomics identification</keyword>
<keyword id="KW-1185">Reference proteome</keyword>
<keyword id="KW-0697">Rotamase</keyword>
<keyword id="KW-0964">Secreted</keyword>
<keyword id="KW-0832">Ubl conjugation</keyword>
<dbReference type="EC" id="5.2.1.8" evidence="13 16 17 18 22 33 34"/>
<dbReference type="EMBL" id="Y00052">
    <property type="protein sequence ID" value="CAA68264.1"/>
    <property type="molecule type" value="mRNA"/>
</dbReference>
<dbReference type="EMBL" id="X52851">
    <property type="protein sequence ID" value="CAA37039.1"/>
    <property type="molecule type" value="Genomic_DNA"/>
</dbReference>
<dbReference type="EMBL" id="AK290085">
    <property type="protein sequence ID" value="BAF82774.1"/>
    <property type="molecule type" value="mRNA"/>
</dbReference>
<dbReference type="EMBL" id="AK293003">
    <property type="protein sequence ID" value="BAF85692.1"/>
    <property type="molecule type" value="mRNA"/>
</dbReference>
<dbReference type="EMBL" id="CR456707">
    <property type="protein sequence ID" value="CAG32988.1"/>
    <property type="molecule type" value="mRNA"/>
</dbReference>
<dbReference type="EMBL" id="AB451307">
    <property type="protein sequence ID" value="BAG70121.1"/>
    <property type="molecule type" value="mRNA"/>
</dbReference>
<dbReference type="EMBL" id="AB451438">
    <property type="protein sequence ID" value="BAG70252.1"/>
    <property type="molecule type" value="mRNA"/>
</dbReference>
<dbReference type="EMBL" id="AY739283">
    <property type="protein sequence ID" value="AAU13906.1"/>
    <property type="molecule type" value="Genomic_DNA"/>
</dbReference>
<dbReference type="EMBL" id="AC004854">
    <property type="status" value="NOT_ANNOTATED_CDS"/>
    <property type="molecule type" value="Genomic_DNA"/>
</dbReference>
<dbReference type="EMBL" id="AC013436">
    <property type="status" value="NOT_ANNOTATED_CDS"/>
    <property type="molecule type" value="Genomic_DNA"/>
</dbReference>
<dbReference type="EMBL" id="BC000689">
    <property type="protein sequence ID" value="AAH00689.1"/>
    <property type="molecule type" value="mRNA"/>
</dbReference>
<dbReference type="EMBL" id="BC003026">
    <property type="protein sequence ID" value="AAH03026.2"/>
    <property type="molecule type" value="mRNA"/>
</dbReference>
<dbReference type="EMBL" id="BC005320">
    <property type="protein sequence ID" value="AAH05320.1"/>
    <property type="molecule type" value="mRNA"/>
</dbReference>
<dbReference type="EMBL" id="BC005982">
    <property type="protein sequence ID" value="AAH05982.1"/>
    <property type="molecule type" value="mRNA"/>
</dbReference>
<dbReference type="EMBL" id="BC007104">
    <property type="protein sequence ID" value="AAH07104.1"/>
    <property type="molecule type" value="mRNA"/>
</dbReference>
<dbReference type="EMBL" id="BC013915">
    <property type="protein sequence ID" value="AAH13915.1"/>
    <property type="molecule type" value="mRNA"/>
</dbReference>
<dbReference type="EMBL" id="BC073992">
    <property type="protein sequence ID" value="AAH73992.1"/>
    <property type="molecule type" value="mRNA"/>
</dbReference>
<dbReference type="EMBL" id="BC093076">
    <property type="protein sequence ID" value="AAH93076.1"/>
    <property type="molecule type" value="mRNA"/>
</dbReference>
<dbReference type="EMBL" id="BC106030">
    <property type="protein sequence ID" value="AAI06031.1"/>
    <property type="molecule type" value="mRNA"/>
</dbReference>
<dbReference type="EMBL" id="BC137057">
    <property type="protein sequence ID" value="AAI37058.1"/>
    <property type="molecule type" value="mRNA"/>
</dbReference>
<dbReference type="EMBL" id="BC137058">
    <property type="protein sequence ID" value="AAI37059.1"/>
    <property type="molecule type" value="mRNA"/>
</dbReference>
<dbReference type="CCDS" id="CCDS5494.1">
    <molecule id="P62937-1"/>
</dbReference>
<dbReference type="CCDS" id="CCDS75592.1">
    <molecule id="P62937-2"/>
</dbReference>
<dbReference type="PIR" id="A94496">
    <property type="entry name" value="CSHUA"/>
</dbReference>
<dbReference type="RefSeq" id="NP_001287910.1">
    <molecule id="P62937-2"/>
    <property type="nucleotide sequence ID" value="NM_001300981.2"/>
</dbReference>
<dbReference type="RefSeq" id="NP_066953.1">
    <molecule id="P62937-1"/>
    <property type="nucleotide sequence ID" value="NM_021130.5"/>
</dbReference>
<dbReference type="RefSeq" id="XP_047276492.1">
    <molecule id="P62937-2"/>
    <property type="nucleotide sequence ID" value="XM_047420536.1"/>
</dbReference>
<dbReference type="RefSeq" id="XP_047276493.1">
    <molecule id="P62937-2"/>
    <property type="nucleotide sequence ID" value="XM_047420537.1"/>
</dbReference>
<dbReference type="RefSeq" id="XP_054214491.1">
    <molecule id="P62937-2"/>
    <property type="nucleotide sequence ID" value="XM_054358516.1"/>
</dbReference>
<dbReference type="PDB" id="1AK4">
    <property type="method" value="X-ray"/>
    <property type="resolution" value="2.36 A"/>
    <property type="chains" value="A/B=1-165"/>
</dbReference>
<dbReference type="PDB" id="1AWQ">
    <property type="method" value="X-ray"/>
    <property type="resolution" value="1.58 A"/>
    <property type="chains" value="A=2-165"/>
</dbReference>
<dbReference type="PDB" id="1AWR">
    <property type="method" value="X-ray"/>
    <property type="resolution" value="1.58 A"/>
    <property type="chains" value="A/B/C/D/E/F=2-165"/>
</dbReference>
<dbReference type="PDB" id="1AWS">
    <property type="method" value="X-ray"/>
    <property type="resolution" value="2.55 A"/>
    <property type="chains" value="A=2-165"/>
</dbReference>
<dbReference type="PDB" id="1AWT">
    <property type="method" value="X-ray"/>
    <property type="resolution" value="2.55 A"/>
    <property type="chains" value="A/B/C/D/E/F=2-165"/>
</dbReference>
<dbReference type="PDB" id="1AWU">
    <property type="method" value="X-ray"/>
    <property type="resolution" value="2.34 A"/>
    <property type="chains" value="A=2-165"/>
</dbReference>
<dbReference type="PDB" id="1AWV">
    <property type="method" value="X-ray"/>
    <property type="resolution" value="2.34 A"/>
    <property type="chains" value="A/B/C/D/E/F=2-165"/>
</dbReference>
<dbReference type="PDB" id="1BCK">
    <property type="method" value="X-ray"/>
    <property type="resolution" value="1.80 A"/>
    <property type="chains" value="A=1-165"/>
</dbReference>
<dbReference type="PDB" id="1CWA">
    <property type="method" value="X-ray"/>
    <property type="resolution" value="2.10 A"/>
    <property type="chains" value="A=1-165"/>
</dbReference>
<dbReference type="PDB" id="1CWB">
    <property type="method" value="X-ray"/>
    <property type="resolution" value="2.20 A"/>
    <property type="chains" value="A=1-165"/>
</dbReference>
<dbReference type="PDB" id="1CWC">
    <property type="method" value="X-ray"/>
    <property type="resolution" value="1.86 A"/>
    <property type="chains" value="A=1-165"/>
</dbReference>
<dbReference type="PDB" id="1CWF">
    <property type="method" value="X-ray"/>
    <property type="resolution" value="1.86 A"/>
    <property type="chains" value="A=1-165"/>
</dbReference>
<dbReference type="PDB" id="1CWH">
    <property type="method" value="X-ray"/>
    <property type="resolution" value="1.86 A"/>
    <property type="chains" value="A=1-165"/>
</dbReference>
<dbReference type="PDB" id="1CWI">
    <property type="method" value="X-ray"/>
    <property type="resolution" value="1.90 A"/>
    <property type="chains" value="A=1-165"/>
</dbReference>
<dbReference type="PDB" id="1CWJ">
    <property type="method" value="X-ray"/>
    <property type="resolution" value="1.80 A"/>
    <property type="chains" value="A=1-165"/>
</dbReference>
<dbReference type="PDB" id="1CWK">
    <property type="method" value="X-ray"/>
    <property type="resolution" value="1.80 A"/>
    <property type="chains" value="A=1-165"/>
</dbReference>
<dbReference type="PDB" id="1CWL">
    <property type="method" value="X-ray"/>
    <property type="resolution" value="1.80 A"/>
    <property type="chains" value="A=1-165"/>
</dbReference>
<dbReference type="PDB" id="1CWM">
    <property type="method" value="X-ray"/>
    <property type="resolution" value="2.00 A"/>
    <property type="chains" value="A=1-165"/>
</dbReference>
<dbReference type="PDB" id="1CWO">
    <property type="method" value="X-ray"/>
    <property type="resolution" value="1.86 A"/>
    <property type="chains" value="A=1-165"/>
</dbReference>
<dbReference type="PDB" id="1FGL">
    <property type="method" value="X-ray"/>
    <property type="resolution" value="1.80 A"/>
    <property type="chains" value="A=1-165"/>
</dbReference>
<dbReference type="PDB" id="1M63">
    <property type="method" value="X-ray"/>
    <property type="resolution" value="2.80 A"/>
    <property type="chains" value="C/G=1-165"/>
</dbReference>
<dbReference type="PDB" id="1M9C">
    <property type="method" value="X-ray"/>
    <property type="resolution" value="2.00 A"/>
    <property type="chains" value="A/B=1-165"/>
</dbReference>
<dbReference type="PDB" id="1M9D">
    <property type="method" value="X-ray"/>
    <property type="resolution" value="1.90 A"/>
    <property type="chains" value="A/B=1-165"/>
</dbReference>
<dbReference type="PDB" id="1M9E">
    <property type="method" value="X-ray"/>
    <property type="resolution" value="1.72 A"/>
    <property type="chains" value="A/B=1-164"/>
</dbReference>
<dbReference type="PDB" id="1M9F">
    <property type="method" value="X-ray"/>
    <property type="resolution" value="1.73 A"/>
    <property type="chains" value="A/B=1-165"/>
</dbReference>
<dbReference type="PDB" id="1M9X">
    <property type="method" value="X-ray"/>
    <property type="resolution" value="1.70 A"/>
    <property type="chains" value="A/B/E/F=1-165"/>
</dbReference>
<dbReference type="PDB" id="1M9Y">
    <property type="method" value="X-ray"/>
    <property type="resolution" value="1.90 A"/>
    <property type="chains" value="A/B/E/F=1-165"/>
</dbReference>
<dbReference type="PDB" id="1MF8">
    <property type="method" value="X-ray"/>
    <property type="resolution" value="3.10 A"/>
    <property type="chains" value="C=1-165"/>
</dbReference>
<dbReference type="PDB" id="1MIK">
    <property type="method" value="X-ray"/>
    <property type="resolution" value="1.76 A"/>
    <property type="chains" value="A=1-165"/>
</dbReference>
<dbReference type="PDB" id="1NMK">
    <property type="method" value="X-ray"/>
    <property type="resolution" value="2.10 A"/>
    <property type="chains" value="A/B=1-165"/>
</dbReference>
<dbReference type="PDB" id="1OCA">
    <property type="method" value="NMR"/>
    <property type="chains" value="A=1-165"/>
</dbReference>
<dbReference type="PDB" id="1RMH">
    <property type="method" value="X-ray"/>
    <property type="resolution" value="2.40 A"/>
    <property type="chains" value="A/B=2-165"/>
</dbReference>
<dbReference type="PDB" id="1VBS">
    <property type="method" value="X-ray"/>
    <property type="resolution" value="2.00 A"/>
    <property type="chains" value="A=1-165"/>
</dbReference>
<dbReference type="PDB" id="1VBT">
    <property type="method" value="X-ray"/>
    <property type="resolution" value="2.30 A"/>
    <property type="chains" value="A/B=1-165"/>
</dbReference>
<dbReference type="PDB" id="1W8L">
    <property type="method" value="X-ray"/>
    <property type="resolution" value="1.80 A"/>
    <property type="chains" value="A=2-165"/>
</dbReference>
<dbReference type="PDB" id="1W8M">
    <property type="method" value="X-ray"/>
    <property type="resolution" value="1.65 A"/>
    <property type="chains" value="A=2-165"/>
</dbReference>
<dbReference type="PDB" id="1W8V">
    <property type="method" value="X-ray"/>
    <property type="resolution" value="1.70 A"/>
    <property type="chains" value="A=2-165"/>
</dbReference>
<dbReference type="PDB" id="1YND">
    <property type="method" value="X-ray"/>
    <property type="resolution" value="1.60 A"/>
    <property type="chains" value="A/B=1-165"/>
</dbReference>
<dbReference type="PDB" id="1ZKF">
    <property type="method" value="X-ray"/>
    <property type="resolution" value="2.55 A"/>
    <property type="chains" value="A/B=1-165"/>
</dbReference>
<dbReference type="PDB" id="2ALF">
    <property type="method" value="X-ray"/>
    <property type="resolution" value="1.90 A"/>
    <property type="chains" value="A=2-165"/>
</dbReference>
<dbReference type="PDB" id="2CPL">
    <property type="method" value="X-ray"/>
    <property type="resolution" value="1.63 A"/>
    <property type="chains" value="A=1-165"/>
</dbReference>
<dbReference type="PDB" id="2CYH">
    <property type="method" value="X-ray"/>
    <property type="resolution" value="1.64 A"/>
    <property type="chains" value="A=2-165"/>
</dbReference>
<dbReference type="PDB" id="2MS4">
    <property type="method" value="NMR"/>
    <property type="chains" value="A=1-165"/>
</dbReference>
<dbReference type="PDB" id="2MZU">
    <property type="method" value="NMR"/>
    <property type="chains" value="A=1-165"/>
</dbReference>
<dbReference type="PDB" id="2N0T">
    <property type="method" value="NMR"/>
    <property type="chains" value="A=1-165"/>
</dbReference>
<dbReference type="PDB" id="2RMA">
    <property type="method" value="X-ray"/>
    <property type="resolution" value="2.10 A"/>
    <property type="chains" value="A/C/E/G/I/K/M/O/Q/S=1-165"/>
</dbReference>
<dbReference type="PDB" id="2RMB">
    <property type="method" value="X-ray"/>
    <property type="resolution" value="2.10 A"/>
    <property type="chains" value="A/C/E/G/I/K/M/O/Q/S=1-165"/>
</dbReference>
<dbReference type="PDB" id="2X25">
    <property type="method" value="X-ray"/>
    <property type="resolution" value="1.20 A"/>
    <property type="chains" value="B=2-165"/>
</dbReference>
<dbReference type="PDB" id="2X2A">
    <property type="method" value="X-ray"/>
    <property type="resolution" value="1.40 A"/>
    <property type="chains" value="A/B=1-165"/>
</dbReference>
<dbReference type="PDB" id="2X2C">
    <property type="method" value="X-ray"/>
    <property type="resolution" value="2.41 A"/>
    <property type="chains" value="K/M/O/Q/S=1-165"/>
</dbReference>
<dbReference type="PDB" id="2X2D">
    <property type="method" value="X-ray"/>
    <property type="resolution" value="1.95 A"/>
    <property type="chains" value="B/C=1-165"/>
</dbReference>
<dbReference type="PDB" id="2XGY">
    <property type="method" value="X-ray"/>
    <property type="resolution" value="1.80 A"/>
    <property type="chains" value="B=1-165"/>
</dbReference>
<dbReference type="PDB" id="3CYH">
    <property type="method" value="X-ray"/>
    <property type="resolution" value="1.90 A"/>
    <property type="chains" value="A=2-165"/>
</dbReference>
<dbReference type="PDB" id="3CYS">
    <property type="method" value="NMR"/>
    <property type="chains" value="A=1-165"/>
</dbReference>
<dbReference type="PDB" id="3K0M">
    <property type="method" value="X-ray"/>
    <property type="resolution" value="1.25 A"/>
    <property type="chains" value="A=1-165"/>
</dbReference>
<dbReference type="PDB" id="3K0N">
    <property type="method" value="X-ray"/>
    <property type="resolution" value="1.39 A"/>
    <property type="chains" value="A=1-165"/>
</dbReference>
<dbReference type="PDB" id="3K0O">
    <property type="method" value="X-ray"/>
    <property type="resolution" value="1.55 A"/>
    <property type="chains" value="A=1-165"/>
</dbReference>
<dbReference type="PDB" id="3K0P">
    <property type="method" value="X-ray"/>
    <property type="resolution" value="1.65 A"/>
    <property type="chains" value="A=1-165"/>
</dbReference>
<dbReference type="PDB" id="3K0Q">
    <property type="method" value="X-ray"/>
    <property type="resolution" value="2.32 A"/>
    <property type="chains" value="A=1-165"/>
</dbReference>
<dbReference type="PDB" id="3K0R">
    <property type="method" value="X-ray"/>
    <property type="resolution" value="2.42 A"/>
    <property type="chains" value="A=1-165"/>
</dbReference>
<dbReference type="PDB" id="3ODI">
    <property type="method" value="X-ray"/>
    <property type="resolution" value="2.20 A"/>
    <property type="chains" value="A/C/E/G/I/K/M/O/Q/S=1-165"/>
</dbReference>
<dbReference type="PDB" id="3ODL">
    <property type="method" value="X-ray"/>
    <property type="resolution" value="2.31 A"/>
    <property type="chains" value="A/C/E/G/I/K/M/O/Q/S=1-165"/>
</dbReference>
<dbReference type="PDB" id="3RDD">
    <property type="method" value="X-ray"/>
    <property type="resolution" value="2.14 A"/>
    <property type="chains" value="A=1-165"/>
</dbReference>
<dbReference type="PDB" id="4CYH">
    <property type="method" value="X-ray"/>
    <property type="resolution" value="2.10 A"/>
    <property type="chains" value="A=2-165"/>
</dbReference>
<dbReference type="PDB" id="4IPZ">
    <property type="method" value="X-ray"/>
    <property type="resolution" value="1.67 A"/>
    <property type="chains" value="A=1-165"/>
</dbReference>
<dbReference type="PDB" id="4N1M">
    <property type="method" value="X-ray"/>
    <property type="resolution" value="1.15 A"/>
    <property type="chains" value="A=1-165"/>
</dbReference>
<dbReference type="PDB" id="4N1N">
    <property type="method" value="X-ray"/>
    <property type="resolution" value="1.50 A"/>
    <property type="chains" value="A=1-165"/>
</dbReference>
<dbReference type="PDB" id="4N1O">
    <property type="method" value="X-ray"/>
    <property type="resolution" value="1.75 A"/>
    <property type="chains" value="A=1-165"/>
</dbReference>
<dbReference type="PDB" id="4N1P">
    <property type="method" value="X-ray"/>
    <property type="resolution" value="1.90 A"/>
    <property type="chains" value="A=1-165"/>
</dbReference>
<dbReference type="PDB" id="4N1Q">
    <property type="method" value="X-ray"/>
    <property type="resolution" value="1.65 A"/>
    <property type="chains" value="A=1-165"/>
</dbReference>
<dbReference type="PDB" id="4N1R">
    <property type="method" value="X-ray"/>
    <property type="resolution" value="1.80 A"/>
    <property type="chains" value="A=1-165"/>
</dbReference>
<dbReference type="PDB" id="4N1S">
    <property type="method" value="X-ray"/>
    <property type="resolution" value="1.47 A"/>
    <property type="chains" value="A=1-165"/>
</dbReference>
<dbReference type="PDB" id="4YUG">
    <property type="method" value="X-ray"/>
    <property type="resolution" value="1.48 A"/>
    <property type="chains" value="A=1-165"/>
</dbReference>
<dbReference type="PDB" id="4YUH">
    <property type="method" value="X-ray"/>
    <property type="resolution" value="1.34 A"/>
    <property type="chains" value="A=1-165"/>
</dbReference>
<dbReference type="PDB" id="4YUI">
    <property type="method" value="X-ray"/>
    <property type="resolution" value="1.38 A"/>
    <property type="chains" value="A=1-165"/>
</dbReference>
<dbReference type="PDB" id="4YUJ">
    <property type="method" value="X-ray"/>
    <property type="resolution" value="1.42 A"/>
    <property type="chains" value="A=1-165"/>
</dbReference>
<dbReference type="PDB" id="4YUK">
    <property type="method" value="X-ray"/>
    <property type="resolution" value="1.48 A"/>
    <property type="chains" value="A=1-165"/>
</dbReference>
<dbReference type="PDB" id="4YUL">
    <property type="method" value="X-ray"/>
    <property type="resolution" value="1.42 A"/>
    <property type="chains" value="A=1-165"/>
</dbReference>
<dbReference type="PDB" id="4YUM">
    <property type="method" value="X-ray"/>
    <property type="resolution" value="1.50 A"/>
    <property type="chains" value="A=1-165"/>
</dbReference>
<dbReference type="PDB" id="4YUN">
    <property type="method" value="X-ray"/>
    <property type="resolution" value="1.58 A"/>
    <property type="chains" value="A=1-165"/>
</dbReference>
<dbReference type="PDB" id="4YUO">
    <property type="method" value="X-ray"/>
    <property type="resolution" value="1.20 A"/>
    <property type="chains" value="A=1-165"/>
</dbReference>
<dbReference type="PDB" id="4YUP">
    <property type="method" value="X-ray"/>
    <property type="resolution" value="1.75 A"/>
    <property type="chains" value="A=1-165"/>
</dbReference>
<dbReference type="PDB" id="5CYH">
    <property type="method" value="X-ray"/>
    <property type="resolution" value="2.10 A"/>
    <property type="chains" value="A=2-165"/>
</dbReference>
<dbReference type="PDB" id="5F66">
    <property type="method" value="X-ray"/>
    <property type="resolution" value="1.15 A"/>
    <property type="chains" value="A=1-165"/>
</dbReference>
<dbReference type="PDB" id="5FJB">
    <property type="method" value="EM"/>
    <property type="resolution" value="9.00 A"/>
    <property type="chains" value="C=2-165"/>
</dbReference>
<dbReference type="PDB" id="5KUL">
    <property type="method" value="X-ray"/>
    <property type="resolution" value="1.70 A"/>
    <property type="chains" value="A=2-165"/>
</dbReference>
<dbReference type="PDB" id="5KUN">
    <property type="method" value="X-ray"/>
    <property type="resolution" value="1.70 A"/>
    <property type="chains" value="A=2-165"/>
</dbReference>
<dbReference type="PDB" id="5KUO">
    <property type="method" value="X-ray"/>
    <property type="resolution" value="1.70 A"/>
    <property type="chains" value="A=2-165"/>
</dbReference>
<dbReference type="PDB" id="5KUQ">
    <property type="method" value="X-ray"/>
    <property type="resolution" value="1.70 A"/>
    <property type="chains" value="A=2-165"/>
</dbReference>
<dbReference type="PDB" id="5KUR">
    <property type="method" value="X-ray"/>
    <property type="resolution" value="1.70 A"/>
    <property type="chains" value="A=2-165"/>
</dbReference>
<dbReference type="PDB" id="5KUS">
    <property type="method" value="X-ray"/>
    <property type="resolution" value="1.70 A"/>
    <property type="chains" value="A=2-165"/>
</dbReference>
<dbReference type="PDB" id="5KUU">
    <property type="method" value="X-ray"/>
    <property type="resolution" value="1.70 A"/>
    <property type="chains" value="A=2-165"/>
</dbReference>
<dbReference type="PDB" id="5KUV">
    <property type="method" value="X-ray"/>
    <property type="resolution" value="1.70 A"/>
    <property type="chains" value="A=2-165"/>
</dbReference>
<dbReference type="PDB" id="5KUW">
    <property type="method" value="X-ray"/>
    <property type="resolution" value="1.70 A"/>
    <property type="chains" value="A=2-165"/>
</dbReference>
<dbReference type="PDB" id="5KUZ">
    <property type="method" value="X-ray"/>
    <property type="resolution" value="1.70 A"/>
    <property type="chains" value="A=2-165"/>
</dbReference>
<dbReference type="PDB" id="5KV0">
    <property type="method" value="X-ray"/>
    <property type="resolution" value="1.70 A"/>
    <property type="chains" value="A=2-165"/>
</dbReference>
<dbReference type="PDB" id="5KV1">
    <property type="method" value="X-ray"/>
    <property type="resolution" value="1.70 A"/>
    <property type="chains" value="A=2-165"/>
</dbReference>
<dbReference type="PDB" id="5KV2">
    <property type="method" value="X-ray"/>
    <property type="resolution" value="1.70 A"/>
    <property type="chains" value="A=2-165"/>
</dbReference>
<dbReference type="PDB" id="5KV3">
    <property type="method" value="X-ray"/>
    <property type="resolution" value="1.70 A"/>
    <property type="chains" value="A=2-165"/>
</dbReference>
<dbReference type="PDB" id="5KV4">
    <property type="method" value="X-ray"/>
    <property type="resolution" value="1.70 A"/>
    <property type="chains" value="A=2-165"/>
</dbReference>
<dbReference type="PDB" id="5KV5">
    <property type="method" value="X-ray"/>
    <property type="resolution" value="1.70 A"/>
    <property type="chains" value="A=2-165"/>
</dbReference>
<dbReference type="PDB" id="5KV6">
    <property type="method" value="X-ray"/>
    <property type="resolution" value="1.70 A"/>
    <property type="chains" value="A=2-165"/>
</dbReference>
<dbReference type="PDB" id="5KV7">
    <property type="method" value="X-ray"/>
    <property type="resolution" value="1.70 A"/>
    <property type="chains" value="A=2-165"/>
</dbReference>
<dbReference type="PDB" id="5LUD">
    <property type="method" value="X-ray"/>
    <property type="resolution" value="1.25 A"/>
    <property type="chains" value="A=1-165"/>
</dbReference>
<dbReference type="PDB" id="5NOQ">
    <property type="method" value="X-ray"/>
    <property type="resolution" value="1.60 A"/>
    <property type="chains" value="A=1-165"/>
</dbReference>
<dbReference type="PDB" id="5NOR">
    <property type="method" value="X-ray"/>
    <property type="resolution" value="1.80 A"/>
    <property type="chains" value="A=1-165"/>
</dbReference>
<dbReference type="PDB" id="5NOS">
    <property type="method" value="X-ray"/>
    <property type="resolution" value="1.35 A"/>
    <property type="chains" value="A=1-165"/>
</dbReference>
<dbReference type="PDB" id="5NOT">
    <property type="method" value="X-ray"/>
    <property type="resolution" value="1.45 A"/>
    <property type="chains" value="A=1-165"/>
</dbReference>
<dbReference type="PDB" id="5NOU">
    <property type="method" value="X-ray"/>
    <property type="resolution" value="1.30 A"/>
    <property type="chains" value="A=1-165"/>
</dbReference>
<dbReference type="PDB" id="5NOV">
    <property type="method" value="X-ray"/>
    <property type="resolution" value="2.00 A"/>
    <property type="chains" value="A=1-165"/>
</dbReference>
<dbReference type="PDB" id="5NOW">
    <property type="method" value="X-ray"/>
    <property type="resolution" value="1.48 A"/>
    <property type="chains" value="A=1-165"/>
</dbReference>
<dbReference type="PDB" id="5NOX">
    <property type="method" value="X-ray"/>
    <property type="resolution" value="1.49 A"/>
    <property type="chains" value="A=1-165"/>
</dbReference>
<dbReference type="PDB" id="5NOY">
    <property type="method" value="X-ray"/>
    <property type="resolution" value="1.43 A"/>
    <property type="chains" value="A=1-165"/>
</dbReference>
<dbReference type="PDB" id="5NOZ">
    <property type="method" value="X-ray"/>
    <property type="resolution" value="1.61 A"/>
    <property type="chains" value="A=1-165"/>
</dbReference>
<dbReference type="PDB" id="5T9U">
    <property type="method" value="X-ray"/>
    <property type="resolution" value="2.30 A"/>
    <property type="chains" value="A/B/C/D=1-164"/>
</dbReference>
<dbReference type="PDB" id="5T9W">
    <property type="method" value="X-ray"/>
    <property type="resolution" value="2.00 A"/>
    <property type="chains" value="A=2-165"/>
</dbReference>
<dbReference type="PDB" id="5T9Z">
    <property type="method" value="X-ray"/>
    <property type="resolution" value="1.40 A"/>
    <property type="chains" value="A=2-164"/>
</dbReference>
<dbReference type="PDB" id="5TA2">
    <property type="method" value="X-ray"/>
    <property type="resolution" value="1.48 A"/>
    <property type="chains" value="A=2-164"/>
</dbReference>
<dbReference type="PDB" id="5TA4">
    <property type="method" value="X-ray"/>
    <property type="resolution" value="1.50 A"/>
    <property type="chains" value="A=2-165"/>
</dbReference>
<dbReference type="PDB" id="5WC7">
    <property type="method" value="X-ray"/>
    <property type="resolution" value="1.43 A"/>
    <property type="chains" value="A=1-165"/>
</dbReference>
<dbReference type="PDB" id="6BTA">
    <property type="method" value="X-ray"/>
    <property type="resolution" value="1.50 A"/>
    <property type="chains" value="A=1-165"/>
</dbReference>
<dbReference type="PDB" id="6GJI">
    <property type="method" value="X-ray"/>
    <property type="resolution" value="1.60 A"/>
    <property type="chains" value="A=1-165"/>
</dbReference>
<dbReference type="PDB" id="6GJJ">
    <property type="method" value="X-ray"/>
    <property type="resolution" value="1.38 A"/>
    <property type="chains" value="A=1-165"/>
</dbReference>
<dbReference type="PDB" id="6GJL">
    <property type="method" value="X-ray"/>
    <property type="resolution" value="1.16 A"/>
    <property type="chains" value="A=1-165"/>
</dbReference>
<dbReference type="PDB" id="6GJM">
    <property type="method" value="X-ray"/>
    <property type="resolution" value="1.35 A"/>
    <property type="chains" value="A=1-165"/>
</dbReference>
<dbReference type="PDB" id="6GJN">
    <property type="method" value="X-ray"/>
    <property type="resolution" value="1.70 A"/>
    <property type="chains" value="A=1-165"/>
</dbReference>
<dbReference type="PDB" id="6GJP">
    <property type="method" value="X-ray"/>
    <property type="resolution" value="1.94 A"/>
    <property type="chains" value="A=1-165"/>
</dbReference>
<dbReference type="PDB" id="6GJR">
    <property type="method" value="X-ray"/>
    <property type="resolution" value="1.69 A"/>
    <property type="chains" value="A=1-165"/>
</dbReference>
<dbReference type="PDB" id="6GJY">
    <property type="method" value="X-ray"/>
    <property type="resolution" value="1.29 A"/>
    <property type="chains" value="A=1-165"/>
</dbReference>
<dbReference type="PDB" id="6GS6">
    <property type="method" value="X-ray"/>
    <property type="resolution" value="1.16 A"/>
    <property type="chains" value="A=1-165"/>
</dbReference>
<dbReference type="PDB" id="6I42">
    <property type="method" value="X-ray"/>
    <property type="resolution" value="1.38 A"/>
    <property type="chains" value="A=2-165"/>
</dbReference>
<dbReference type="PDB" id="6U5C">
    <property type="method" value="X-ray"/>
    <property type="resolution" value="1.62 A"/>
    <property type="chains" value="A=1-165"/>
</dbReference>
<dbReference type="PDB" id="6U5D">
    <property type="method" value="X-ray"/>
    <property type="resolution" value="1.65 A"/>
    <property type="chains" value="A=1-165"/>
</dbReference>
<dbReference type="PDB" id="6U5E">
    <property type="method" value="X-ray"/>
    <property type="resolution" value="1.56 A"/>
    <property type="chains" value="A=1-165"/>
</dbReference>
<dbReference type="PDB" id="6U5G">
    <property type="method" value="EM"/>
    <property type="resolution" value="2.50 A"/>
    <property type="chains" value="A=1-165"/>
</dbReference>
<dbReference type="PDB" id="6X3R">
    <property type="method" value="X-ray"/>
    <property type="resolution" value="1.80 A"/>
    <property type="chains" value="A=1-165"/>
</dbReference>
<dbReference type="PDB" id="6X3Y">
    <property type="method" value="X-ray"/>
    <property type="resolution" value="1.40 A"/>
    <property type="chains" value="A=1-165"/>
</dbReference>
<dbReference type="PDB" id="6X4M">
    <property type="method" value="X-ray"/>
    <property type="resolution" value="1.50 A"/>
    <property type="chains" value="A=1-165"/>
</dbReference>
<dbReference type="PDB" id="6X4N">
    <property type="method" value="X-ray"/>
    <property type="resolution" value="1.51 A"/>
    <property type="chains" value="A=1-165"/>
</dbReference>
<dbReference type="PDB" id="6X4O">
    <property type="method" value="X-ray"/>
    <property type="resolution" value="1.50 A"/>
    <property type="chains" value="A=1-165"/>
</dbReference>
<dbReference type="PDB" id="6X4P">
    <property type="method" value="X-ray"/>
    <property type="resolution" value="1.50 A"/>
    <property type="chains" value="A=1-165"/>
</dbReference>
<dbReference type="PDB" id="6X4Q">
    <property type="method" value="X-ray"/>
    <property type="resolution" value="1.80 A"/>
    <property type="chains" value="A=1-165"/>
</dbReference>
<dbReference type="PDB" id="6Y9V">
    <property type="method" value="EM"/>
    <property type="resolution" value="6.90 A"/>
    <property type="chains" value="J=2-165"/>
</dbReference>
<dbReference type="PDB" id="6Y9W">
    <property type="method" value="EM"/>
    <property type="resolution" value="4.10 A"/>
    <property type="chains" value="J=2-165"/>
</dbReference>
<dbReference type="PDB" id="6Y9X">
    <property type="method" value="EM"/>
    <property type="resolution" value="4.40 A"/>
    <property type="chains" value="J=2-165"/>
</dbReference>
<dbReference type="PDB" id="6Y9Y">
    <property type="method" value="EM"/>
    <property type="resolution" value="6.10 A"/>
    <property type="chains" value="J=2-165"/>
</dbReference>
<dbReference type="PDB" id="6Y9Z">
    <property type="method" value="EM"/>
    <property type="resolution" value="4.80 A"/>
    <property type="chains" value="J=2-165"/>
</dbReference>
<dbReference type="PDB" id="6ZDJ">
    <property type="method" value="EM"/>
    <property type="resolution" value="5.80 A"/>
    <property type="chains" value="J=2-165"/>
</dbReference>
<dbReference type="PDB" id="7ABT">
    <property type="method" value="X-ray"/>
    <property type="resolution" value="1.31 A"/>
    <property type="chains" value="A=2-164"/>
</dbReference>
<dbReference type="PDB" id="7N9X">
    <property type="method" value="X-ray"/>
    <property type="resolution" value="3.51 A"/>
    <property type="chains" value="GGG/HHH/III=1-165"/>
</dbReference>
<dbReference type="PDB" id="7PCJ">
    <property type="method" value="X-ray"/>
    <property type="resolution" value="1.91 A"/>
    <property type="chains" value="A/D=1-165"/>
</dbReference>
<dbReference type="PDB" id="7QBW">
    <property type="method" value="X-ray"/>
    <property type="resolution" value="1.59 A"/>
    <property type="chains" value="A=1-165"/>
</dbReference>
<dbReference type="PDB" id="7TA8">
    <property type="method" value="NMR"/>
    <property type="chains" value="A=1-165"/>
</dbReference>
<dbReference type="PDB" id="7UPN">
    <property type="method" value="EM"/>
    <property type="resolution" value="3.50 A"/>
    <property type="chains" value="A/B=1-165"/>
</dbReference>
<dbReference type="PDB" id="7UXJ">
    <property type="method" value="X-ray"/>
    <property type="resolution" value="2.07 A"/>
    <property type="chains" value="A/B/C/D=1-165"/>
</dbReference>
<dbReference type="PDB" id="7UXM">
    <property type="method" value="X-ray"/>
    <property type="resolution" value="1.20 A"/>
    <property type="chains" value="A/B/C=1-165"/>
</dbReference>
<dbReference type="PDB" id="7UXN">
    <property type="method" value="X-ray"/>
    <property type="resolution" value="1.36 A"/>
    <property type="chains" value="A=1-165"/>
</dbReference>
<dbReference type="PDB" id="8G9P">
    <property type="method" value="X-ray"/>
    <property type="resolution" value="1.50 A"/>
    <property type="chains" value="C/D=1-165"/>
</dbReference>
<dbReference type="PDB" id="8G9Q">
    <property type="method" value="X-ray"/>
    <property type="resolution" value="1.40 A"/>
    <property type="chains" value="D=1-165"/>
</dbReference>
<dbReference type="PDB" id="8HZ8">
    <property type="method" value="X-ray"/>
    <property type="resolution" value="1.81 A"/>
    <property type="chains" value="A=2-165"/>
</dbReference>
<dbReference type="PDB" id="8TBF">
    <property type="method" value="X-ray"/>
    <property type="resolution" value="1.50 A"/>
    <property type="chains" value="C/D=1-165"/>
</dbReference>
<dbReference type="PDB" id="8TBG">
    <property type="method" value="X-ray"/>
    <property type="resolution" value="1.20 A"/>
    <property type="chains" value="C/D=1-165"/>
</dbReference>
<dbReference type="PDB" id="8TBH">
    <property type="method" value="X-ray"/>
    <property type="resolution" value="1.50 A"/>
    <property type="chains" value="C/D=1-165"/>
</dbReference>
<dbReference type="PDB" id="8TBI">
    <property type="method" value="X-ray"/>
    <property type="resolution" value="1.59 A"/>
    <property type="chains" value="C/D=1-165"/>
</dbReference>
<dbReference type="PDB" id="8TBJ">
    <property type="method" value="X-ray"/>
    <property type="resolution" value="1.45 A"/>
    <property type="chains" value="C/D=1-165"/>
</dbReference>
<dbReference type="PDB" id="8TBK">
    <property type="method" value="X-ray"/>
    <property type="resolution" value="1.26 A"/>
    <property type="chains" value="C/D=1-165"/>
</dbReference>
<dbReference type="PDB" id="8TBL">
    <property type="method" value="X-ray"/>
    <property type="resolution" value="1.88 A"/>
    <property type="chains" value="C/D=1-165"/>
</dbReference>
<dbReference type="PDB" id="8TBM">
    <property type="method" value="X-ray"/>
    <property type="resolution" value="1.57 A"/>
    <property type="chains" value="C/D=1-165"/>
</dbReference>
<dbReference type="PDB" id="8TBN">
    <property type="method" value="X-ray"/>
    <property type="resolution" value="1.46 A"/>
    <property type="chains" value="C/D=1-165"/>
</dbReference>
<dbReference type="PDB" id="9AX6">
    <property type="method" value="X-ray"/>
    <property type="resolution" value="1.65 A"/>
    <property type="chains" value="C/D=1-165"/>
</dbReference>
<dbReference type="PDB" id="9BFW">
    <property type="method" value="X-ray"/>
    <property type="resolution" value="1.20 A"/>
    <property type="chains" value="D=1-165"/>
</dbReference>
<dbReference type="PDB" id="9BFY">
    <property type="method" value="X-ray"/>
    <property type="resolution" value="1.26 A"/>
    <property type="chains" value="C/D=1-165"/>
</dbReference>
<dbReference type="PDB" id="9BFZ">
    <property type="method" value="X-ray"/>
    <property type="resolution" value="1.80 A"/>
    <property type="chains" value="C/D=1-165"/>
</dbReference>
<dbReference type="PDB" id="9BG1">
    <property type="method" value="X-ray"/>
    <property type="resolution" value="1.51 A"/>
    <property type="chains" value="C/D=1-165"/>
</dbReference>
<dbReference type="PDB" id="9BHO">
    <property type="method" value="X-ray"/>
    <property type="resolution" value="1.89 A"/>
    <property type="chains" value="B/D=1-165"/>
</dbReference>
<dbReference type="PDB" id="9BHP">
    <property type="method" value="X-ray"/>
    <property type="resolution" value="2.10 A"/>
    <property type="chains" value="B/D=1-165"/>
</dbReference>
<dbReference type="PDB" id="9BHQ">
    <property type="method" value="X-ray"/>
    <property type="resolution" value="1.90 A"/>
    <property type="chains" value="B/D=1-165"/>
</dbReference>
<dbReference type="PDB" id="9BI1">
    <property type="method" value="X-ray"/>
    <property type="resolution" value="1.65 A"/>
    <property type="chains" value="B/D=1-165"/>
</dbReference>
<dbReference type="PDB" id="9BI2">
    <property type="method" value="X-ray"/>
    <property type="resolution" value="2.15 A"/>
    <property type="chains" value="B/D=1-165"/>
</dbReference>
<dbReference type="PDB" id="9GHY">
    <property type="method" value="X-ray"/>
    <property type="resolution" value="1.15 A"/>
    <property type="chains" value="A=1-165"/>
</dbReference>
<dbReference type="PDBsum" id="1AK4"/>
<dbReference type="PDBsum" id="1AWQ"/>
<dbReference type="PDBsum" id="1AWR"/>
<dbReference type="PDBsum" id="1AWS"/>
<dbReference type="PDBsum" id="1AWT"/>
<dbReference type="PDBsum" id="1AWU"/>
<dbReference type="PDBsum" id="1AWV"/>
<dbReference type="PDBsum" id="1BCK"/>
<dbReference type="PDBsum" id="1CWA"/>
<dbReference type="PDBsum" id="1CWB"/>
<dbReference type="PDBsum" id="1CWC"/>
<dbReference type="PDBsum" id="1CWF"/>
<dbReference type="PDBsum" id="1CWH"/>
<dbReference type="PDBsum" id="1CWI"/>
<dbReference type="PDBsum" id="1CWJ"/>
<dbReference type="PDBsum" id="1CWK"/>
<dbReference type="PDBsum" id="1CWL"/>
<dbReference type="PDBsum" id="1CWM"/>
<dbReference type="PDBsum" id="1CWO"/>
<dbReference type="PDBsum" id="1FGL"/>
<dbReference type="PDBsum" id="1M63"/>
<dbReference type="PDBsum" id="1M9C"/>
<dbReference type="PDBsum" id="1M9D"/>
<dbReference type="PDBsum" id="1M9E"/>
<dbReference type="PDBsum" id="1M9F"/>
<dbReference type="PDBsum" id="1M9X"/>
<dbReference type="PDBsum" id="1M9Y"/>
<dbReference type="PDBsum" id="1MF8"/>
<dbReference type="PDBsum" id="1MIK"/>
<dbReference type="PDBsum" id="1NMK"/>
<dbReference type="PDBsum" id="1OCA"/>
<dbReference type="PDBsum" id="1RMH"/>
<dbReference type="PDBsum" id="1VBS"/>
<dbReference type="PDBsum" id="1VBT"/>
<dbReference type="PDBsum" id="1W8L"/>
<dbReference type="PDBsum" id="1W8M"/>
<dbReference type="PDBsum" id="1W8V"/>
<dbReference type="PDBsum" id="1YND"/>
<dbReference type="PDBsum" id="1ZKF"/>
<dbReference type="PDBsum" id="2ALF"/>
<dbReference type="PDBsum" id="2CPL"/>
<dbReference type="PDBsum" id="2CYH"/>
<dbReference type="PDBsum" id="2MS4"/>
<dbReference type="PDBsum" id="2MZU"/>
<dbReference type="PDBsum" id="2N0T"/>
<dbReference type="PDBsum" id="2RMA"/>
<dbReference type="PDBsum" id="2RMB"/>
<dbReference type="PDBsum" id="2X25"/>
<dbReference type="PDBsum" id="2X2A"/>
<dbReference type="PDBsum" id="2X2C"/>
<dbReference type="PDBsum" id="2X2D"/>
<dbReference type="PDBsum" id="2XGY"/>
<dbReference type="PDBsum" id="3CYH"/>
<dbReference type="PDBsum" id="3CYS"/>
<dbReference type="PDBsum" id="3K0M"/>
<dbReference type="PDBsum" id="3K0N"/>
<dbReference type="PDBsum" id="3K0O"/>
<dbReference type="PDBsum" id="3K0P"/>
<dbReference type="PDBsum" id="3K0Q"/>
<dbReference type="PDBsum" id="3K0R"/>
<dbReference type="PDBsum" id="3ODI"/>
<dbReference type="PDBsum" id="3ODL"/>
<dbReference type="PDBsum" id="3RDD"/>
<dbReference type="PDBsum" id="4CYH"/>
<dbReference type="PDBsum" id="4IPZ"/>
<dbReference type="PDBsum" id="4N1M"/>
<dbReference type="PDBsum" id="4N1N"/>
<dbReference type="PDBsum" id="4N1O"/>
<dbReference type="PDBsum" id="4N1P"/>
<dbReference type="PDBsum" id="4N1Q"/>
<dbReference type="PDBsum" id="4N1R"/>
<dbReference type="PDBsum" id="4N1S"/>
<dbReference type="PDBsum" id="4YUG"/>
<dbReference type="PDBsum" id="4YUH"/>
<dbReference type="PDBsum" id="4YUI"/>
<dbReference type="PDBsum" id="4YUJ"/>
<dbReference type="PDBsum" id="4YUK"/>
<dbReference type="PDBsum" id="4YUL"/>
<dbReference type="PDBsum" id="4YUM"/>
<dbReference type="PDBsum" id="4YUN"/>
<dbReference type="PDBsum" id="4YUO"/>
<dbReference type="PDBsum" id="4YUP"/>
<dbReference type="PDBsum" id="5CYH"/>
<dbReference type="PDBsum" id="5F66"/>
<dbReference type="PDBsum" id="5FJB"/>
<dbReference type="PDBsum" id="5KUL"/>
<dbReference type="PDBsum" id="5KUN"/>
<dbReference type="PDBsum" id="5KUO"/>
<dbReference type="PDBsum" id="5KUQ"/>
<dbReference type="PDBsum" id="5KUR"/>
<dbReference type="PDBsum" id="5KUS"/>
<dbReference type="PDBsum" id="5KUU"/>
<dbReference type="PDBsum" id="5KUV"/>
<dbReference type="PDBsum" id="5KUW"/>
<dbReference type="PDBsum" id="5KUZ"/>
<dbReference type="PDBsum" id="5KV0"/>
<dbReference type="PDBsum" id="5KV1"/>
<dbReference type="PDBsum" id="5KV2"/>
<dbReference type="PDBsum" id="5KV3"/>
<dbReference type="PDBsum" id="5KV4"/>
<dbReference type="PDBsum" id="5KV5"/>
<dbReference type="PDBsum" id="5KV6"/>
<dbReference type="PDBsum" id="5KV7"/>
<dbReference type="PDBsum" id="5LUD"/>
<dbReference type="PDBsum" id="5NOQ"/>
<dbReference type="PDBsum" id="5NOR"/>
<dbReference type="PDBsum" id="5NOS"/>
<dbReference type="PDBsum" id="5NOT"/>
<dbReference type="PDBsum" id="5NOU"/>
<dbReference type="PDBsum" id="5NOV"/>
<dbReference type="PDBsum" id="5NOW"/>
<dbReference type="PDBsum" id="5NOX"/>
<dbReference type="PDBsum" id="5NOY"/>
<dbReference type="PDBsum" id="5NOZ"/>
<dbReference type="PDBsum" id="5T9U"/>
<dbReference type="PDBsum" id="5T9W"/>
<dbReference type="PDBsum" id="5T9Z"/>
<dbReference type="PDBsum" id="5TA2"/>
<dbReference type="PDBsum" id="5TA4"/>
<dbReference type="PDBsum" id="5WC7"/>
<dbReference type="PDBsum" id="6BTA"/>
<dbReference type="PDBsum" id="6GJI"/>
<dbReference type="PDBsum" id="6GJJ"/>
<dbReference type="PDBsum" id="6GJL"/>
<dbReference type="PDBsum" id="6GJM"/>
<dbReference type="PDBsum" id="6GJN"/>
<dbReference type="PDBsum" id="6GJP"/>
<dbReference type="PDBsum" id="6GJR"/>
<dbReference type="PDBsum" id="6GJY"/>
<dbReference type="PDBsum" id="6GS6"/>
<dbReference type="PDBsum" id="6I42"/>
<dbReference type="PDBsum" id="6U5C"/>
<dbReference type="PDBsum" id="6U5D"/>
<dbReference type="PDBsum" id="6U5E"/>
<dbReference type="PDBsum" id="6U5G"/>
<dbReference type="PDBsum" id="6X3R"/>
<dbReference type="PDBsum" id="6X3Y"/>
<dbReference type="PDBsum" id="6X4M"/>
<dbReference type="PDBsum" id="6X4N"/>
<dbReference type="PDBsum" id="6X4O"/>
<dbReference type="PDBsum" id="6X4P"/>
<dbReference type="PDBsum" id="6X4Q"/>
<dbReference type="PDBsum" id="6Y9V"/>
<dbReference type="PDBsum" id="6Y9W"/>
<dbReference type="PDBsum" id="6Y9X"/>
<dbReference type="PDBsum" id="6Y9Y"/>
<dbReference type="PDBsum" id="6Y9Z"/>
<dbReference type="PDBsum" id="6ZDJ"/>
<dbReference type="PDBsum" id="7ABT"/>
<dbReference type="PDBsum" id="7N9X"/>
<dbReference type="PDBsum" id="7PCJ"/>
<dbReference type="PDBsum" id="7QBW"/>
<dbReference type="PDBsum" id="7TA8"/>
<dbReference type="PDBsum" id="7UPN"/>
<dbReference type="PDBsum" id="7UXJ"/>
<dbReference type="PDBsum" id="7UXM"/>
<dbReference type="PDBsum" id="7UXN"/>
<dbReference type="PDBsum" id="8G9P"/>
<dbReference type="PDBsum" id="8G9Q"/>
<dbReference type="PDBsum" id="8HZ8"/>
<dbReference type="PDBsum" id="8TBF"/>
<dbReference type="PDBsum" id="8TBG"/>
<dbReference type="PDBsum" id="8TBH"/>
<dbReference type="PDBsum" id="8TBI"/>
<dbReference type="PDBsum" id="8TBJ"/>
<dbReference type="PDBsum" id="8TBK"/>
<dbReference type="PDBsum" id="8TBL"/>
<dbReference type="PDBsum" id="8TBM"/>
<dbReference type="PDBsum" id="8TBN"/>
<dbReference type="PDBsum" id="9AX6"/>
<dbReference type="PDBsum" id="9BFW"/>
<dbReference type="PDBsum" id="9BFY"/>
<dbReference type="PDBsum" id="9BFZ"/>
<dbReference type="PDBsum" id="9BG1"/>
<dbReference type="PDBsum" id="9BHO"/>
<dbReference type="PDBsum" id="9BHP"/>
<dbReference type="PDBsum" id="9BHQ"/>
<dbReference type="PDBsum" id="9BI1"/>
<dbReference type="PDBsum" id="9BI2"/>
<dbReference type="PDBsum" id="9GHY"/>
<dbReference type="BMRB" id="P62937"/>
<dbReference type="EMDB" id="EMD-10738"/>
<dbReference type="EMDB" id="EMD-10739"/>
<dbReference type="EMDB" id="EMD-10740"/>
<dbReference type="EMDB" id="EMD-10741"/>
<dbReference type="EMDB" id="EMD-10742"/>
<dbReference type="EMDB" id="EMD-11176"/>
<dbReference type="EMDB" id="EMD-20645"/>
<dbReference type="EMDB" id="EMD-26673"/>
<dbReference type="SMR" id="P62937"/>
<dbReference type="BioGRID" id="111474">
    <property type="interactions" value="897"/>
</dbReference>
<dbReference type="CORUM" id="P62937"/>
<dbReference type="DIP" id="DIP-6080N"/>
<dbReference type="FunCoup" id="P62937">
    <property type="interactions" value="1583"/>
</dbReference>
<dbReference type="IntAct" id="P62937">
    <property type="interactions" value="169"/>
</dbReference>
<dbReference type="MINT" id="P62937"/>
<dbReference type="STRING" id="9606.ENSP00000419425"/>
<dbReference type="BindingDB" id="P62937"/>
<dbReference type="ChEMBL" id="CHEMBL1949"/>
<dbReference type="DrugBank" id="DB01742">
    <property type="generic name" value="(3r)-1-Acetyl-3-Methylpiperidine"/>
</dbReference>
<dbReference type="DrugBank" id="DB11638">
    <property type="generic name" value="Artenimol"/>
</dbReference>
<dbReference type="DrugBank" id="DB09130">
    <property type="generic name" value="Copper"/>
</dbReference>
<dbReference type="DrugBank" id="DB08168">
    <property type="generic name" value="Coumarin 120"/>
</dbReference>
<dbReference type="DrugBank" id="DB00091">
    <property type="generic name" value="Cyclosporine"/>
</dbReference>
<dbReference type="DrugBank" id="DB02419">
    <property type="generic name" value="Ethyl Oxo(Piperidin-1-Yl)Acetate"/>
</dbReference>
<dbReference type="DrugBank" id="DB00172">
    <property type="generic name" value="Proline"/>
</dbReference>
<dbReference type="DrugBank" id="DB03393">
    <property type="generic name" value="Sanglifehrin A"/>
</dbReference>
<dbReference type="DrugCentral" id="P62937"/>
<dbReference type="GuidetoPHARMACOLOGY" id="2751"/>
<dbReference type="GlyCosmos" id="P62937">
    <property type="glycosylation" value="2 sites, 2 glycans"/>
</dbReference>
<dbReference type="GlyGen" id="P62937">
    <property type="glycosylation" value="3 sites, 6 N-linked glycans (2 sites), 2 O-linked glycans (1 site)"/>
</dbReference>
<dbReference type="iPTMnet" id="P62937"/>
<dbReference type="MetOSite" id="P62937"/>
<dbReference type="PhosphoSitePlus" id="P62937"/>
<dbReference type="SwissPalm" id="P62937"/>
<dbReference type="BioMuta" id="PPIA"/>
<dbReference type="DMDM" id="51702775"/>
<dbReference type="OGP" id="P62937"/>
<dbReference type="REPRODUCTION-2DPAGE" id="IPI00419585"/>
<dbReference type="REPRODUCTION-2DPAGE" id="P62937"/>
<dbReference type="jPOST" id="P62937"/>
<dbReference type="MassIVE" id="P62937"/>
<dbReference type="PaxDb" id="9606-ENSP00000419425"/>
<dbReference type="PeptideAtlas" id="P62937"/>
<dbReference type="PRIDE" id="P62937"/>
<dbReference type="ProteomicsDB" id="57455">
    <molecule id="P62937-1"/>
</dbReference>
<dbReference type="ProteomicsDB" id="62564"/>
<dbReference type="Pumba" id="P62937"/>
<dbReference type="TopDownProteomics" id="P62937-1">
    <molecule id="P62937-1"/>
</dbReference>
<dbReference type="ABCD" id="P62937">
    <property type="antibodies" value="2 sequenced antibodies"/>
</dbReference>
<dbReference type="Antibodypedia" id="13466">
    <property type="antibodies" value="665 antibodies from 44 providers"/>
</dbReference>
<dbReference type="DNASU" id="5478"/>
<dbReference type="Ensembl" id="ENST00000355968.10">
    <molecule id="P62937-2"/>
    <property type="protein sequence ID" value="ENSP00000430817.1"/>
    <property type="gene ID" value="ENSG00000196262.15"/>
</dbReference>
<dbReference type="Ensembl" id="ENST00000468812.6">
    <molecule id="P62937-1"/>
    <property type="protein sequence ID" value="ENSP00000419425.1"/>
    <property type="gene ID" value="ENSG00000196262.15"/>
</dbReference>
<dbReference type="Ensembl" id="ENST00000489459.5">
    <molecule id="P62937-2"/>
    <property type="protein sequence ID" value="ENSP00000427976.1"/>
    <property type="gene ID" value="ENSG00000196262.15"/>
</dbReference>
<dbReference type="Ensembl" id="ENST00000677022.1">
    <molecule id="P62937-2"/>
    <property type="protein sequence ID" value="ENSP00000504216.1"/>
    <property type="gene ID" value="ENSG00000196262.15"/>
</dbReference>
<dbReference type="Ensembl" id="ENST00000677107.1">
    <molecule id="P62937-2"/>
    <property type="protein sequence ID" value="ENSP00000504735.1"/>
    <property type="gene ID" value="ENSG00000196262.15"/>
</dbReference>
<dbReference type="Ensembl" id="ENST00000678789.1">
    <molecule id="P62937-2"/>
    <property type="protein sequence ID" value="ENSP00000503804.1"/>
    <property type="gene ID" value="ENSG00000196262.15"/>
</dbReference>
<dbReference type="Ensembl" id="ENST00000678805.1">
    <molecule id="P62937-2"/>
    <property type="protein sequence ID" value="ENSP00000502945.1"/>
    <property type="gene ID" value="ENSG00000196262.15"/>
</dbReference>
<dbReference type="GeneID" id="5478"/>
<dbReference type="KEGG" id="hsa:5478"/>
<dbReference type="MANE-Select" id="ENST00000468812.6">
    <property type="protein sequence ID" value="ENSP00000419425.1"/>
    <property type="RefSeq nucleotide sequence ID" value="NM_021130.5"/>
    <property type="RefSeq protein sequence ID" value="NP_066953.1"/>
</dbReference>
<dbReference type="UCSC" id="uc064djo.1">
    <molecule id="P62937-1"/>
    <property type="organism name" value="human"/>
</dbReference>
<dbReference type="AGR" id="HGNC:9253"/>
<dbReference type="CTD" id="5478"/>
<dbReference type="DisGeNET" id="5478"/>
<dbReference type="GeneCards" id="PPIA"/>
<dbReference type="HGNC" id="HGNC:9253">
    <property type="gene designation" value="PPIA"/>
</dbReference>
<dbReference type="HPA" id="ENSG00000196262">
    <property type="expression patterns" value="Low tissue specificity"/>
</dbReference>
<dbReference type="MIM" id="123840">
    <property type="type" value="gene"/>
</dbReference>
<dbReference type="neXtProt" id="NX_P62937"/>
<dbReference type="OpenTargets" id="ENSG00000196262"/>
<dbReference type="PharmGKB" id="PA33574"/>
<dbReference type="VEuPathDB" id="HostDB:ENSG00000196262"/>
<dbReference type="eggNOG" id="KOG0865">
    <property type="taxonomic scope" value="Eukaryota"/>
</dbReference>
<dbReference type="GeneTree" id="ENSGT00950000183087"/>
<dbReference type="HOGENOM" id="CLU_012062_38_0_1"/>
<dbReference type="InParanoid" id="P62937"/>
<dbReference type="OMA" id="CVSIYGH"/>
<dbReference type="OrthoDB" id="9753748at2759"/>
<dbReference type="PAN-GO" id="P62937">
    <property type="GO annotations" value="6 GO annotations based on evolutionary models"/>
</dbReference>
<dbReference type="PhylomeDB" id="P62937"/>
<dbReference type="TreeFam" id="TF316719"/>
<dbReference type="BRENDA" id="5.2.1.8">
    <property type="organism ID" value="2681"/>
</dbReference>
<dbReference type="PathwayCommons" id="P62937"/>
<dbReference type="Reactome" id="R-HSA-114608">
    <property type="pathway name" value="Platelet degranulation"/>
</dbReference>
<dbReference type="Reactome" id="R-HSA-162585">
    <property type="pathway name" value="Uncoating of the HIV Virion"/>
</dbReference>
<dbReference type="Reactome" id="R-HSA-162588">
    <property type="pathway name" value="Budding and maturation of HIV virion"/>
</dbReference>
<dbReference type="Reactome" id="R-HSA-162592">
    <property type="pathway name" value="Integration of provirus"/>
</dbReference>
<dbReference type="Reactome" id="R-HSA-162594">
    <property type="pathway name" value="Early Phase of HIV Life Cycle"/>
</dbReference>
<dbReference type="Reactome" id="R-HSA-164516">
    <property type="pathway name" value="Minus-strand DNA synthesis"/>
</dbReference>
<dbReference type="Reactome" id="R-HSA-164525">
    <property type="pathway name" value="Plus-strand DNA synthesis"/>
</dbReference>
<dbReference type="Reactome" id="R-HSA-173107">
    <property type="pathway name" value="Binding and entry of HIV virion"/>
</dbReference>
<dbReference type="Reactome" id="R-HSA-175474">
    <property type="pathway name" value="Assembly Of The HIV Virion"/>
</dbReference>
<dbReference type="Reactome" id="R-HSA-180689">
    <property type="pathway name" value="APOBEC3G mediated resistance to HIV-1 infection"/>
</dbReference>
<dbReference type="Reactome" id="R-HSA-2025928">
    <property type="pathway name" value="Calcineurin activates NFAT"/>
</dbReference>
<dbReference type="Reactome" id="R-HSA-210991">
    <property type="pathway name" value="Basigin interactions"/>
</dbReference>
<dbReference type="Reactome" id="R-HSA-6798695">
    <property type="pathway name" value="Neutrophil degranulation"/>
</dbReference>
<dbReference type="Reactome" id="R-HSA-8950505">
    <property type="pathway name" value="Gene and protein expression by JAK-STAT signaling after Interleukin-12 stimulation"/>
</dbReference>
<dbReference type="Reactome" id="R-HSA-9692916">
    <property type="pathway name" value="SARS-CoV-1 activates/modulates innate immune responses"/>
</dbReference>
<dbReference type="SignaLink" id="P62937"/>
<dbReference type="BioGRID-ORCS" id="5478">
    <property type="hits" value="552 hits in 1129 CRISPR screens"/>
</dbReference>
<dbReference type="CD-CODE" id="91857CE7">
    <property type="entry name" value="Nucleolus"/>
</dbReference>
<dbReference type="CD-CODE" id="FB4E32DD">
    <property type="entry name" value="Presynaptic clusters and postsynaptic densities"/>
</dbReference>
<dbReference type="ChiTaRS" id="PPIA">
    <property type="organism name" value="human"/>
</dbReference>
<dbReference type="EvolutionaryTrace" id="P62937"/>
<dbReference type="GeneWiki" id="Peptidylprolyl_isomerase_A"/>
<dbReference type="GenomeRNAi" id="5478"/>
<dbReference type="Pharos" id="P62937">
    <property type="development level" value="Tclin"/>
</dbReference>
<dbReference type="PRO" id="PR:P62937"/>
<dbReference type="Proteomes" id="UP000005640">
    <property type="component" value="Chromosome 7"/>
</dbReference>
<dbReference type="RNAct" id="P62937">
    <property type="molecule type" value="protein"/>
</dbReference>
<dbReference type="Bgee" id="ENSG00000196262">
    <property type="expression patterns" value="Expressed in ventricular zone and 180 other cell types or tissues"/>
</dbReference>
<dbReference type="ExpressionAtlas" id="P62937">
    <property type="expression patterns" value="baseline and differential"/>
</dbReference>
<dbReference type="GO" id="GO:0005737">
    <property type="term" value="C:cytoplasm"/>
    <property type="evidence" value="ECO:0000314"/>
    <property type="project" value="UniProtKB"/>
</dbReference>
<dbReference type="GO" id="GO:0005829">
    <property type="term" value="C:cytosol"/>
    <property type="evidence" value="ECO:0007005"/>
    <property type="project" value="UniProtKB"/>
</dbReference>
<dbReference type="GO" id="GO:0070062">
    <property type="term" value="C:extracellular exosome"/>
    <property type="evidence" value="ECO:0007005"/>
    <property type="project" value="UniProtKB"/>
</dbReference>
<dbReference type="GO" id="GO:0005576">
    <property type="term" value="C:extracellular region"/>
    <property type="evidence" value="ECO:0000314"/>
    <property type="project" value="UniProtKB"/>
</dbReference>
<dbReference type="GO" id="GO:0005615">
    <property type="term" value="C:extracellular space"/>
    <property type="evidence" value="ECO:0007005"/>
    <property type="project" value="UniProtKB"/>
</dbReference>
<dbReference type="GO" id="GO:1904813">
    <property type="term" value="C:ficolin-1-rich granule lumen"/>
    <property type="evidence" value="ECO:0000304"/>
    <property type="project" value="Reactome"/>
</dbReference>
<dbReference type="GO" id="GO:0005925">
    <property type="term" value="C:focal adhesion"/>
    <property type="evidence" value="ECO:0007005"/>
    <property type="project" value="UniProtKB"/>
</dbReference>
<dbReference type="GO" id="GO:0016020">
    <property type="term" value="C:membrane"/>
    <property type="evidence" value="ECO:0007005"/>
    <property type="project" value="UniProtKB"/>
</dbReference>
<dbReference type="GO" id="GO:0005634">
    <property type="term" value="C:nucleus"/>
    <property type="evidence" value="ECO:0000314"/>
    <property type="project" value="UniProtKB"/>
</dbReference>
<dbReference type="GO" id="GO:0032991">
    <property type="term" value="C:protein-containing complex"/>
    <property type="evidence" value="ECO:0000314"/>
    <property type="project" value="UniProtKB"/>
</dbReference>
<dbReference type="GO" id="GO:0034774">
    <property type="term" value="C:secretory granule lumen"/>
    <property type="evidence" value="ECO:0000304"/>
    <property type="project" value="Reactome"/>
</dbReference>
<dbReference type="GO" id="GO:0031982">
    <property type="term" value="C:vesicle"/>
    <property type="evidence" value="ECO:0007005"/>
    <property type="project" value="UniProtKB"/>
</dbReference>
<dbReference type="GO" id="GO:0016018">
    <property type="term" value="F:cyclosporin A binding"/>
    <property type="evidence" value="ECO:0000318"/>
    <property type="project" value="GO_Central"/>
</dbReference>
<dbReference type="GO" id="GO:1904399">
    <property type="term" value="F:heparan sulfate binding"/>
    <property type="evidence" value="ECO:0000314"/>
    <property type="project" value="UniProtKB"/>
</dbReference>
<dbReference type="GO" id="GO:0005178">
    <property type="term" value="F:integrin binding"/>
    <property type="evidence" value="ECO:0000250"/>
    <property type="project" value="UniProtKB"/>
</dbReference>
<dbReference type="GO" id="GO:0003755">
    <property type="term" value="F:peptidyl-prolyl cis-trans isomerase activity"/>
    <property type="evidence" value="ECO:0000314"/>
    <property type="project" value="UniProtKB"/>
</dbReference>
<dbReference type="GO" id="GO:0003723">
    <property type="term" value="F:RNA binding"/>
    <property type="evidence" value="ECO:0007005"/>
    <property type="project" value="UniProtKB"/>
</dbReference>
<dbReference type="GO" id="GO:0051082">
    <property type="term" value="F:unfolded protein binding"/>
    <property type="evidence" value="ECO:0000304"/>
    <property type="project" value="UniProtKB"/>
</dbReference>
<dbReference type="GO" id="GO:0046790">
    <property type="term" value="F:virion binding"/>
    <property type="evidence" value="ECO:0000303"/>
    <property type="project" value="UniProtKB"/>
</dbReference>
<dbReference type="GO" id="GO:0032148">
    <property type="term" value="P:activation of protein kinase B activity"/>
    <property type="evidence" value="ECO:0000314"/>
    <property type="project" value="UniProtKB"/>
</dbReference>
<dbReference type="GO" id="GO:0006915">
    <property type="term" value="P:apoptotic process"/>
    <property type="evidence" value="ECO:0000314"/>
    <property type="project" value="UniProtKB"/>
</dbReference>
<dbReference type="GO" id="GO:0060352">
    <property type="term" value="P:cell adhesion molecule production"/>
    <property type="evidence" value="ECO:0000314"/>
    <property type="project" value="UniProtKB"/>
</dbReference>
<dbReference type="GO" id="GO:0034599">
    <property type="term" value="P:cellular response to oxidative stress"/>
    <property type="evidence" value="ECO:0000314"/>
    <property type="project" value="UniProtKB"/>
</dbReference>
<dbReference type="GO" id="GO:0042118">
    <property type="term" value="P:endothelial cell activation"/>
    <property type="evidence" value="ECO:0000314"/>
    <property type="project" value="UniProtKB"/>
</dbReference>
<dbReference type="GO" id="GO:0030595">
    <property type="term" value="P:leukocyte chemotaxis"/>
    <property type="evidence" value="ECO:0000315"/>
    <property type="project" value="UniProtKB"/>
</dbReference>
<dbReference type="GO" id="GO:0034389">
    <property type="term" value="P:lipid droplet organization"/>
    <property type="evidence" value="ECO:0000315"/>
    <property type="project" value="UniProtKB"/>
</dbReference>
<dbReference type="GO" id="GO:1902176">
    <property type="term" value="P:negative regulation of oxidative stress-induced intrinsic apoptotic signaling pathway"/>
    <property type="evidence" value="ECO:0000315"/>
    <property type="project" value="UniProtKB"/>
</dbReference>
<dbReference type="GO" id="GO:0061944">
    <property type="term" value="P:negative regulation of protein K48-linked ubiquitination"/>
    <property type="evidence" value="ECO:0000315"/>
    <property type="project" value="UniProtKB"/>
</dbReference>
<dbReference type="GO" id="GO:0006469">
    <property type="term" value="P:negative regulation of protein kinase activity"/>
    <property type="evidence" value="ECO:0000314"/>
    <property type="project" value="UniProtKB"/>
</dbReference>
<dbReference type="GO" id="GO:0001933">
    <property type="term" value="P:negative regulation of protein phosphorylation"/>
    <property type="evidence" value="ECO:0000314"/>
    <property type="project" value="UniProtKB"/>
</dbReference>
<dbReference type="GO" id="GO:0032873">
    <property type="term" value="P:negative regulation of stress-activated MAPK cascade"/>
    <property type="evidence" value="ECO:0000315"/>
    <property type="project" value="UniProtKB"/>
</dbReference>
<dbReference type="GO" id="GO:1903901">
    <property type="term" value="P:negative regulation of viral life cycle"/>
    <property type="evidence" value="ECO:0000315"/>
    <property type="project" value="UniProtKB"/>
</dbReference>
<dbReference type="GO" id="GO:0030182">
    <property type="term" value="P:neuron differentiation"/>
    <property type="evidence" value="ECO:0007669"/>
    <property type="project" value="Ensembl"/>
</dbReference>
<dbReference type="GO" id="GO:0030593">
    <property type="term" value="P:neutrophil chemotaxis"/>
    <property type="evidence" value="ECO:0000314"/>
    <property type="project" value="UniProtKB"/>
</dbReference>
<dbReference type="GO" id="GO:0030168">
    <property type="term" value="P:platelet activation"/>
    <property type="evidence" value="ECO:0000250"/>
    <property type="project" value="UniProtKB"/>
</dbReference>
<dbReference type="GO" id="GO:0070527">
    <property type="term" value="P:platelet aggregation"/>
    <property type="evidence" value="ECO:0000250"/>
    <property type="project" value="UniProtKB"/>
</dbReference>
<dbReference type="GO" id="GO:0043410">
    <property type="term" value="P:positive regulation of MAPK cascade"/>
    <property type="evidence" value="ECO:0000314"/>
    <property type="project" value="UniProtKB"/>
</dbReference>
<dbReference type="GO" id="GO:0051092">
    <property type="term" value="P:positive regulation of NF-kappaB transcription factor activity"/>
    <property type="evidence" value="ECO:0000314"/>
    <property type="project" value="UniProtKB"/>
</dbReference>
<dbReference type="GO" id="GO:0001934">
    <property type="term" value="P:positive regulation of protein phosphorylation"/>
    <property type="evidence" value="ECO:0000314"/>
    <property type="project" value="UniProtKB"/>
</dbReference>
<dbReference type="GO" id="GO:0050714">
    <property type="term" value="P:positive regulation of protein secretion"/>
    <property type="evidence" value="ECO:0000315"/>
    <property type="project" value="UniProtKB"/>
</dbReference>
<dbReference type="GO" id="GO:0045070">
    <property type="term" value="P:positive regulation of viral genome replication"/>
    <property type="evidence" value="ECO:0000315"/>
    <property type="project" value="UniProtKB"/>
</dbReference>
<dbReference type="GO" id="GO:0006457">
    <property type="term" value="P:protein folding"/>
    <property type="evidence" value="ECO:0000318"/>
    <property type="project" value="GO_Central"/>
</dbReference>
<dbReference type="GO" id="GO:0000413">
    <property type="term" value="P:protein peptidyl-prolyl isomerization"/>
    <property type="evidence" value="ECO:0000314"/>
    <property type="project" value="UniProtKB"/>
</dbReference>
<dbReference type="GO" id="GO:2001233">
    <property type="term" value="P:regulation of apoptotic signaling pathway"/>
    <property type="evidence" value="ECO:0000315"/>
    <property type="project" value="UniProtKB"/>
</dbReference>
<dbReference type="GO" id="GO:0045069">
    <property type="term" value="P:regulation of viral genome replication"/>
    <property type="evidence" value="ECO:0000315"/>
    <property type="project" value="UniProtKB"/>
</dbReference>
<dbReference type="GO" id="GO:0019076">
    <property type="term" value="P:viral release from host cell"/>
    <property type="evidence" value="ECO:0000304"/>
    <property type="project" value="UniProtKB"/>
</dbReference>
<dbReference type="CDD" id="cd01926">
    <property type="entry name" value="cyclophilin_ABH_like"/>
    <property type="match status" value="1"/>
</dbReference>
<dbReference type="FunFam" id="2.40.100.10:FF:000011">
    <property type="entry name" value="Peptidyl-prolyl cis-trans isomerase A"/>
    <property type="match status" value="1"/>
</dbReference>
<dbReference type="Gene3D" id="2.40.100.10">
    <property type="entry name" value="Cyclophilin-like"/>
    <property type="match status" value="1"/>
</dbReference>
<dbReference type="InterPro" id="IPR029000">
    <property type="entry name" value="Cyclophilin-like_dom_sf"/>
</dbReference>
<dbReference type="InterPro" id="IPR024936">
    <property type="entry name" value="Cyclophilin-type_PPIase"/>
</dbReference>
<dbReference type="InterPro" id="IPR020892">
    <property type="entry name" value="Cyclophilin-type_PPIase_CS"/>
</dbReference>
<dbReference type="InterPro" id="IPR002130">
    <property type="entry name" value="Cyclophilin-type_PPIase_dom"/>
</dbReference>
<dbReference type="PANTHER" id="PTHR11071">
    <property type="entry name" value="PEPTIDYL-PROLYL CIS-TRANS ISOMERASE"/>
    <property type="match status" value="1"/>
</dbReference>
<dbReference type="PANTHER" id="PTHR11071:SF490">
    <property type="entry name" value="PEPTIDYL-PROLYL CIS-TRANS ISOMERASE A"/>
    <property type="match status" value="1"/>
</dbReference>
<dbReference type="Pfam" id="PF00160">
    <property type="entry name" value="Pro_isomerase"/>
    <property type="match status" value="1"/>
</dbReference>
<dbReference type="PIRSF" id="PIRSF001467">
    <property type="entry name" value="Peptidylpro_ismrse"/>
    <property type="match status" value="1"/>
</dbReference>
<dbReference type="PRINTS" id="PR00153">
    <property type="entry name" value="CSAPPISMRASE"/>
</dbReference>
<dbReference type="SUPFAM" id="SSF50891">
    <property type="entry name" value="Cyclophilin-like"/>
    <property type="match status" value="1"/>
</dbReference>
<dbReference type="PROSITE" id="PS00170">
    <property type="entry name" value="CSA_PPIASE_1"/>
    <property type="match status" value="1"/>
</dbReference>
<dbReference type="PROSITE" id="PS50072">
    <property type="entry name" value="CSA_PPIASE_2"/>
    <property type="match status" value="1"/>
</dbReference>
<gene>
    <name type="primary">PPIA</name>
    <name type="synonym">CYPA</name>
</gene>
<feature type="chain" id="PRO_0000423240" description="Peptidyl-prolyl cis-trans isomerase A">
    <location>
        <begin position="1"/>
        <end position="165"/>
    </location>
</feature>
<feature type="initiator methionine" description="Removed; alternate" evidence="8 21 26 28 29 35 38 41">
    <location>
        <position position="1"/>
    </location>
</feature>
<feature type="chain" id="PRO_0000064115" description="Peptidyl-prolyl cis-trans isomerase A, N-terminally processed">
    <location>
        <begin position="2"/>
        <end position="165"/>
    </location>
</feature>
<feature type="domain" description="PPIase cyclophilin-type" evidence="3">
    <location>
        <begin position="7"/>
        <end position="163"/>
    </location>
</feature>
<feature type="modified residue" description="N-acetylmethionine" evidence="35 38 39 41">
    <location>
        <position position="1"/>
    </location>
</feature>
<feature type="modified residue" description="N-acetylvaline; partial; in Peptidyl-prolyl cis-trans isomerase A, N-terminally processed" evidence="21 29 35 41">
    <location>
        <position position="2"/>
    </location>
</feature>
<feature type="modified residue" description="N6-acetyllysine; alternate" evidence="36">
    <location>
        <position position="28"/>
    </location>
</feature>
<feature type="modified residue" description="N6-acetyllysine" evidence="36">
    <location>
        <position position="44"/>
    </location>
</feature>
<feature type="modified residue" description="N6-acetyllysine" evidence="36">
    <location>
        <position position="76"/>
    </location>
</feature>
<feature type="modified residue" description="Phosphoserine" evidence="40">
    <location>
        <position position="77"/>
    </location>
</feature>
<feature type="modified residue" description="N6-acetyllysine; alternate" evidence="36">
    <location>
        <position position="82"/>
    </location>
</feature>
<feature type="modified residue" description="Phosphothreonine" evidence="37">
    <location>
        <position position="93"/>
    </location>
</feature>
<feature type="modified residue" description="N6-acetyllysine" evidence="15 22 36">
    <location>
        <position position="125"/>
    </location>
</feature>
<feature type="modified residue" description="N6-acetyllysine" evidence="36">
    <location>
        <position position="131"/>
    </location>
</feature>
<feature type="modified residue" description="N6-acetyllysine" evidence="1">
    <location>
        <position position="133"/>
    </location>
</feature>
<feature type="glycosylation site" description="N-linked (GlcNAc...) asparagine" evidence="2">
    <location>
        <position position="108"/>
    </location>
</feature>
<feature type="cross-link" description="Glycyl lysine isopeptide (Lys-Gly) (interchain with G-Cter in SUMO2); alternate" evidence="42">
    <location>
        <position position="28"/>
    </location>
</feature>
<feature type="cross-link" description="Glycyl lysine isopeptide (Lys-Gly) (interchain with G-Cter in ubiquitin); alternate">
    <location>
        <position position="28"/>
    </location>
</feature>
<feature type="cross-link" description="Glycyl lysine isopeptide (Lys-Gly) (interchain with G-Cter in SUMO2); alternate" evidence="42">
    <location>
        <position position="82"/>
    </location>
</feature>
<feature type="splice variant" id="VSP_056050" description="In isoform 2." evidence="30 31">
    <location>
        <begin position="1"/>
        <end position="60"/>
    </location>
</feature>
<feature type="mutagenesis site" description="Loss of peptidyl-prolyl cis-trans isomerase activity. No loss of its interaction with BSG/CD147 or its ability to induce leukocyte chemotaxis. No effect on its interaction with MAP3K5/ASK1. Loss of its ability to negatively regulate oxidative stress-induced apoptosis mediated by MAP3K5/ASK1. Reduced interaction with TARDBP. No loss of interaction with influenza A virus matrix protein 1 or its ability to inhibit viral replication." evidence="12 17 22 23">
    <original>R</original>
    <variation>A</variation>
    <location>
        <position position="55"/>
    </location>
</feature>
<feature type="mutagenesis site" description="Loss of ability to stimulate MAPK/ERK phosphorylation." evidence="5">
    <original>F</original>
    <variation>A</variation>
    <location>
        <position position="60"/>
    </location>
</feature>
<feature type="mutagenesis site" description="No effect on peptidyl-prolyl cis-trans isomerase activity. Reduced interaction with BSG/CD147 and ability to induce leukocyte chemotaxis." evidence="17">
    <original>R</original>
    <variation>A</variation>
    <location>
        <position position="69"/>
    </location>
</feature>
<feature type="mutagenesis site" description="No effect on peptidyl-prolyl cis-trans isomerase activity. Reduced interaction with BSG/CD147 and ability to induce leukocyte chemotaxis." evidence="17">
    <original>H</original>
    <variation>A</variation>
    <location>
        <position position="70"/>
    </location>
</feature>
<feature type="mutagenesis site" description="No effect on peptidyl-prolyl cis-trans isomerase activity. Reduced interaction with BSG/CD147 and ability to induce leukocyte chemotaxis." evidence="17">
    <original>T</original>
    <variation>A</variation>
    <location>
        <position position="107"/>
    </location>
</feature>
<feature type="mutagenesis site" description="Reduced ability to stimulate MAPK/ERK phosphorylation." evidence="5">
    <original>F</original>
    <variation>A</variation>
    <location>
        <position position="113"/>
    </location>
</feature>
<feature type="mutagenesis site" description="200-fold decrease of sensitivity to CsA. Reduced ability to stimulate MAPK/ERK phosphorylation." evidence="5 13">
    <original>W</original>
    <variation>A</variation>
    <location>
        <position position="121"/>
    </location>
</feature>
<feature type="mutagenesis site" description="Loss of peptidyl-prolyl cis-trans isomerase activity." evidence="16">
    <original>W</original>
    <variation>E</variation>
    <location>
        <position position="121"/>
    </location>
</feature>
<feature type="mutagenesis site" description="75-fold decrease of sensitivity to CsA." evidence="13">
    <original>W</original>
    <variation>F</variation>
    <location>
        <position position="121"/>
    </location>
</feature>
<feature type="mutagenesis site" description="No effect on peptidyl-prolyl cis-trans isomerase activity." evidence="16">
    <original>W</original>
    <variation>H</variation>
    <location>
        <position position="121"/>
    </location>
</feature>
<feature type="mutagenesis site" description="Acetylation-mimetic mutant; no effect on its interaction with TARDBP." evidence="22">
    <original>K</original>
    <variation>Q</variation>
    <location>
        <position position="125"/>
    </location>
</feature>
<feature type="mutagenesis site" description="Loss of acetylation and interaction with TARDBP." evidence="22">
    <original>K</original>
    <variation>R</variation>
    <location>
        <position position="125"/>
    </location>
</feature>
<feature type="mutagenesis site" description="Loss of peptidyl-prolyl cis-trans isomerase activity and interaction with HCV NS5A. Loss of ability to stimulate MAPK/ERK phosphorylation." evidence="5 18">
    <original>H</original>
    <variation>A</variation>
    <location>
        <position position="126"/>
    </location>
</feature>
<feature type="sequence conflict" description="In Ref. 8; AAH05982." evidence="32" ref="8">
    <original>I</original>
    <variation>T</variation>
    <location>
        <position position="89"/>
    </location>
</feature>
<feature type="sequence conflict" description="In Ref. 8; AAH07104." evidence="32" ref="8">
    <original>N</original>
    <variation>I</variation>
    <location>
        <position position="106"/>
    </location>
</feature>
<feature type="sequence conflict" description="In Ref. 4; CAG32988." evidence="32" ref="4">
    <original>E</original>
    <variation>D</variation>
    <location>
        <position position="165"/>
    </location>
</feature>
<feature type="strand" evidence="44">
    <location>
        <begin position="5"/>
        <end position="12"/>
    </location>
</feature>
<feature type="strand" evidence="44">
    <location>
        <begin position="15"/>
        <end position="24"/>
    </location>
</feature>
<feature type="turn" evidence="44">
    <location>
        <begin position="26"/>
        <end position="28"/>
    </location>
</feature>
<feature type="helix" evidence="44">
    <location>
        <begin position="30"/>
        <end position="41"/>
    </location>
</feature>
<feature type="turn" evidence="44">
    <location>
        <begin position="42"/>
        <end position="44"/>
    </location>
</feature>
<feature type="strand" evidence="44">
    <location>
        <begin position="55"/>
        <end position="57"/>
    </location>
</feature>
<feature type="turn" evidence="44">
    <location>
        <begin position="58"/>
        <end position="60"/>
    </location>
</feature>
<feature type="strand" evidence="44">
    <location>
        <begin position="61"/>
        <end position="64"/>
    </location>
</feature>
<feature type="turn" evidence="44">
    <location>
        <begin position="67"/>
        <end position="69"/>
    </location>
</feature>
<feature type="strand" evidence="44">
    <location>
        <begin position="70"/>
        <end position="73"/>
    </location>
</feature>
<feature type="strand" evidence="43">
    <location>
        <begin position="74"/>
        <end position="77"/>
    </location>
</feature>
<feature type="strand" evidence="45">
    <location>
        <begin position="78"/>
        <end position="81"/>
    </location>
</feature>
<feature type="strand" evidence="44">
    <location>
        <begin position="97"/>
        <end position="100"/>
    </location>
</feature>
<feature type="strand" evidence="46">
    <location>
        <begin position="102"/>
        <end position="104"/>
    </location>
</feature>
<feature type="strand" evidence="47">
    <location>
        <begin position="108"/>
        <end position="110"/>
    </location>
</feature>
<feature type="strand" evidence="44">
    <location>
        <begin position="112"/>
        <end position="117"/>
    </location>
</feature>
<feature type="helix" evidence="44">
    <location>
        <begin position="120"/>
        <end position="122"/>
    </location>
</feature>
<feature type="turn" evidence="44">
    <location>
        <begin position="123"/>
        <end position="125"/>
    </location>
</feature>
<feature type="strand" evidence="44">
    <location>
        <begin position="128"/>
        <end position="134"/>
    </location>
</feature>
<feature type="helix" evidence="44">
    <location>
        <begin position="136"/>
        <end position="143"/>
    </location>
</feature>
<feature type="strand" evidence="48">
    <location>
        <begin position="148"/>
        <end position="150"/>
    </location>
</feature>
<feature type="strand" evidence="43">
    <location>
        <begin position="152"/>
        <end position="154"/>
    </location>
</feature>
<feature type="strand" evidence="44">
    <location>
        <begin position="156"/>
        <end position="164"/>
    </location>
</feature>
<proteinExistence type="evidence at protein level"/>
<comment type="function">
    <text evidence="1 5 9 12 13 16 17 18 19 20 22 23 24 25">Catalyzes the cis-trans isomerization of proline imidic peptide bonds in oligopeptides (PubMed:2001362, PubMed:20676357, PubMed:21245143, PubMed:21593166, PubMed:25678563). Exerts a strong chemotactic effect on leukocytes partly through activation of one of its membrane receptors BSG/CD147, initiating a signaling cascade that culminates in MAPK/ERK activation (PubMed:11943775, PubMed:21245143). Activates endothelial cells (ECs) in a pro-inflammatory manner by stimulating activation of NF-kappa-B and ERK, JNK and p38 MAP-kinases and by inducing expression of adhesion molecules including SELE and VCAM1 (PubMed:15130913). Induces apoptosis in ECs by promoting the FOXO1-dependent expression of CCL2 and BCL2L11 which are involved in EC chemotaxis and apoptosis (PubMed:31063815). In response to oxidative stress, initiates proapoptotic and antiapoptotic signaling in ECs via activation of NF-kappa-B and AKT1 and up-regulation of antiapoptotic protein BCL2 (PubMed:23180369). Negatively regulates MAP3K5/ASK1 kinase activity, autophosphorylation and oxidative stress-induced apoptosis mediated by MAP3K5/ASK1 (PubMed:26095851). Necessary for the assembly of TARDBP in heterogeneous nuclear ribonucleoprotein (hnRNP) complexes and regulates TARDBP binding to RNA UG repeats and TARDBP-dependent expression of HDAC6, ATG7 and VCP which are involved in clearance of protein aggregates (PubMed:25678563). Plays an important role in platelet activation and aggregation (By similarity). Regulates calcium mobilization and integrin ITGA2B:ITGB3 bidirectional signaling via increased ROS production as well as by facilitating the interaction between integrin and the cell cytoskeleton (By similarity). Binds heparan sulfate glycosaminoglycans (PubMed:11943775). Inhibits replication of influenza A virus (IAV) (PubMed:19207730). Inhibits ITCH/AIP4-mediated ubiquitination of matrix protein 1 (M1) of IAV by impairing the interaction of ITCH/AIP4 with M1, followed by the suppression of the nuclear export of M1, and finally reduction of the replication of IAV (PubMed:22347431, PubMed:30328013).</text>
</comment>
<comment type="function">
    <text evidence="10">(Microbial infection) May act as a mediator between human SARS coronavirus nucleoprotein and BSG/CD147 in the process of invasion of host cells by the virus (PubMed:15688292).</text>
</comment>
<comment type="function">
    <text evidence="18">(Microbial infection) Stimulates RNA-binding ability of HCV NS5A in a peptidyl-prolyl cis-trans isomerase activity-dependent manner.</text>
</comment>
<comment type="catalytic activity">
    <reaction evidence="13 16 17 18 22 33 34">
        <text>[protein]-peptidylproline (omega=180) = [protein]-peptidylproline (omega=0)</text>
        <dbReference type="Rhea" id="RHEA:16237"/>
        <dbReference type="Rhea" id="RHEA-COMP:10747"/>
        <dbReference type="Rhea" id="RHEA-COMP:10748"/>
        <dbReference type="ChEBI" id="CHEBI:83833"/>
        <dbReference type="ChEBI" id="CHEBI:83834"/>
        <dbReference type="EC" id="5.2.1.8"/>
    </reaction>
</comment>
<comment type="activity regulation">
    <text evidence="13">Binds cyclosporin A (CsA). CsA mediates some of its effects via an inhibitory action on PPIase.</text>
</comment>
<comment type="subunit">
    <text evidence="1 4 5 6 7 10 17 22 23 25">Interacts with protein phosphatase PPP3CA/calcineurin A (PubMed:12218175, PubMed:12357034). Interacts with PRPF19 isoform 2 (via N-terminus) (By similarity). Interacts with isoform 2 of BSG/CD147 (PubMed:11353871, PubMed:11943775, PubMed:15688292, PubMed:21245143). Interacts with FOXO1; the interaction promotes FOXO1 dephosphorylation, nuclear accumulation and transcriptional activity (PubMed:31063815). Interacts with integrin ITGA2B:ITGB3; the interaction is ROS and peptidyl-prolyl cis-trans isomerase (PPIase) activity-dependent and is increased in the presence of thrombin (By similarity). Interacts with MAP3K5 (PubMed:26095851). Interacts with TARDBP; the interaction is dependent on the RNA-binding activity of TARDBP and the PPIase activity of PPIA/CYPA and the acetylation of PPIA/CYPA at Lys-125 favors the interaction (PubMed:25678563). Interacts with HNRNPA1, HNRNPA2B1, HNRNPC, RBMX, HNRNPK and HNRNPM (PubMed:25678563).</text>
</comment>
<comment type="subunit">
    <text evidence="15 27">(Microbial infection) Interacts with HIV-1 capsid protein (PubMed:20364129, PubMed:8513493).</text>
</comment>
<comment type="subunit">
    <text evidence="10">(Microbial infection) Interacts with human SARS coronavirus nucleoprotein.</text>
</comment>
<comment type="subunit">
    <text evidence="14">(Microbial infection) Interacts with measles virus nucleoprotein.</text>
</comment>
<comment type="subunit">
    <text evidence="12">(Microbial infection) Interacts with influenza A virus matrix protein 1.</text>
</comment>
<comment type="subunit">
    <text evidence="18">(Microbial infection) Interacts with HCV NS5A; the interaction stimulates RNA-binding ability of NS5A and is dependent on the peptidyl-prolyl cis-trans isomerase activity of PPIA/CYPA.</text>
</comment>
<comment type="interaction">
    <interactant intactId="EBI-437708">
        <id>P62937</id>
    </interactant>
    <interactant intactId="EBI-77613">
        <id>P05067</id>
        <label>APP</label>
    </interactant>
    <organismsDiffer>false</organismsDiffer>
    <experiments>4</experiments>
</comment>
<comment type="interaction">
    <interactant intactId="EBI-437708">
        <id>P62937</id>
    </interactant>
    <interactant intactId="EBI-750709">
        <id>P35613</id>
        <label>BSG</label>
    </interactant>
    <organismsDiffer>false</organismsDiffer>
    <experiments>2</experiments>
</comment>
<comment type="interaction">
    <interactant intactId="EBI-437708">
        <id>P62937</id>
    </interactant>
    <interactant intactId="EBI-1041567">
        <id>Q00535</id>
        <label>CDK5</label>
    </interactant>
    <organismsDiffer>false</organismsDiffer>
    <experiments>3</experiments>
</comment>
<comment type="interaction">
    <interactant intactId="EBI-437708">
        <id>P62937</id>
    </interactant>
    <interactant intactId="EBI-287556">
        <id>P46108-1</id>
        <label>CRK</label>
    </interactant>
    <organismsDiffer>false</organismsDiffer>
    <experiments>4</experiments>
</comment>
<comment type="interaction">
    <interactant intactId="EBI-437708">
        <id>P62937</id>
    </interactant>
    <interactant intactId="EBI-25884102">
        <id>O43614</id>
        <label>HCRTR2</label>
    </interactant>
    <organismsDiffer>false</organismsDiffer>
    <experiments>3</experiments>
</comment>
<comment type="interaction">
    <interactant intactId="EBI-437708">
        <id>P62937</id>
    </interactant>
    <interactant intactId="EBI-996065">
        <id>O14686</id>
        <label>KMT2D</label>
    </interactant>
    <organismsDiffer>false</organismsDiffer>
    <experiments>2</experiments>
</comment>
<comment type="interaction">
    <interactant intactId="EBI-437708">
        <id>P62937</id>
    </interactant>
    <interactant intactId="EBI-739832">
        <id>Q8TBB1</id>
        <label>LNX1</label>
    </interactant>
    <organismsDiffer>false</organismsDiffer>
    <experiments>3</experiments>
</comment>
<comment type="interaction">
    <interactant intactId="EBI-437708">
        <id>P62937</id>
    </interactant>
    <interactant intactId="EBI-347233">
        <id>O75376</id>
        <label>NCOR1</label>
    </interactant>
    <organismsDiffer>false</organismsDiffer>
    <experiments>3</experiments>
</comment>
<comment type="interaction">
    <interactant intactId="EBI-437708">
        <id>P62937</id>
    </interactant>
    <interactant intactId="EBI-728153">
        <id>Q16849</id>
        <label>PTPRN</label>
    </interactant>
    <organismsDiffer>false</organismsDiffer>
    <experiments>3</experiments>
</comment>
<comment type="interaction">
    <interactant intactId="EBI-437708">
        <id>P62937</id>
    </interactant>
    <interactant intactId="EBI-372635">
        <id>P62841</id>
        <label>RPS15</label>
    </interactant>
    <organismsDiffer>false</organismsDiffer>
    <experiments>3</experiments>
</comment>
<comment type="interaction">
    <interactant intactId="EBI-437708">
        <id>P62937</id>
    </interactant>
    <interactant intactId="EBI-710464">
        <id>O00267</id>
        <label>SUPT5H</label>
    </interactant>
    <organismsDiffer>false</organismsDiffer>
    <experiments>2</experiments>
</comment>
<comment type="interaction">
    <interactant intactId="EBI-437708">
        <id>P62937</id>
    </interactant>
    <interactant intactId="EBI-1036263">
        <id>Q72497</id>
        <label>gag</label>
    </interactant>
    <organismsDiffer>true</organismsDiffer>
    <experiments>7</experiments>
</comment>
<comment type="interaction">
    <interactant intactId="EBI-437708">
        <id>P62937</id>
    </interactant>
    <interactant intactId="EBI-25475856">
        <id>P0DTC9</id>
        <label>N</label>
    </interactant>
    <organismsDiffer>true</organismsDiffer>
    <experiments>3</experiments>
</comment>
<comment type="interaction">
    <interactant intactId="EBI-437708">
        <id>P62937</id>
    </interactant>
    <interactant intactId="EBI-7602718">
        <id>P59595</id>
        <label>N</label>
    </interactant>
    <organismsDiffer>true</organismsDiffer>
    <experiments>4</experiments>
</comment>
<comment type="interaction">
    <interactant intactId="EBI-437708">
        <id>P62937</id>
    </interactant>
    <interactant intactId="EBI-25475797">
        <id>PRO_0000037309</id>
        <label>rep</label>
        <dbReference type="UniProtKB" id="P0C6X7"/>
    </interactant>
    <organismsDiffer>true</organismsDiffer>
    <experiments>4</experiments>
</comment>
<comment type="interaction">
    <interactant intactId="EBI-437708">
        <id>P62937</id>
    </interactant>
    <interactant intactId="EBI-6927873">
        <id>PRO_0000045602</id>
        <dbReference type="UniProtKB" id="Q99IB8"/>
    </interactant>
    <organismsDiffer>true</organismsDiffer>
    <experiments>2</experiments>
</comment>
<comment type="interaction">
    <interactant intactId="EBI-25884072">
        <id>P62937-2</id>
    </interactant>
    <interactant intactId="EBI-5280499">
        <id>Q66PJ3-4</id>
        <label>ARL6IP4</label>
    </interactant>
    <organismsDiffer>false</organismsDiffer>
    <experiments>3</experiments>
</comment>
<comment type="interaction">
    <interactant intactId="EBI-25884072">
        <id>P62937-2</id>
    </interactant>
    <interactant intactId="EBI-8994378">
        <id>Q14032</id>
        <label>BAAT</label>
    </interactant>
    <organismsDiffer>false</organismsDiffer>
    <experiments>3</experiments>
</comment>
<comment type="interaction">
    <interactant intactId="EBI-25884072">
        <id>P62937-2</id>
    </interactant>
    <interactant intactId="EBI-6598617">
        <id>Q6PH81</id>
        <label>C16orf87</label>
    </interactant>
    <organismsDiffer>false</organismsDiffer>
    <experiments>3</experiments>
</comment>
<comment type="interaction">
    <interactant intactId="EBI-25884072">
        <id>P62937-2</id>
    </interactant>
    <interactant intactId="EBI-742887">
        <id>Q8TAP6</id>
        <label>CEP76</label>
    </interactant>
    <organismsDiffer>false</organismsDiffer>
    <experiments>3</experiments>
</comment>
<comment type="interaction">
    <interactant intactId="EBI-25884072">
        <id>P62937-2</id>
    </interactant>
    <interactant intactId="EBI-13213391">
        <id>Q96NE9-2</id>
        <label>FRMD6</label>
    </interactant>
    <organismsDiffer>false</organismsDiffer>
    <experiments>3</experiments>
</comment>
<comment type="interaction">
    <interactant intactId="EBI-25884072">
        <id>P62937-2</id>
    </interactant>
    <interactant intactId="EBI-618189">
        <id>Q06547-2</id>
        <label>GABPB1</label>
    </interactant>
    <organismsDiffer>false</organismsDiffer>
    <experiments>3</experiments>
</comment>
<comment type="interaction">
    <interactant intactId="EBI-25884072">
        <id>P62937-2</id>
    </interactant>
    <interactant intactId="EBI-9088619">
        <id>Q06547-3</id>
        <label>GABPB1</label>
    </interactant>
    <organismsDiffer>false</organismsDiffer>
    <experiments>3</experiments>
</comment>
<comment type="interaction">
    <interactant intactId="EBI-25884072">
        <id>P62937-2</id>
    </interactant>
    <interactant intactId="EBI-11959863">
        <id>Q9NWQ4-1</id>
        <label>GPATCH2L</label>
    </interactant>
    <organismsDiffer>false</organismsDiffer>
    <experiments>3</experiments>
</comment>
<comment type="interaction">
    <interactant intactId="EBI-25884072">
        <id>P62937-2</id>
    </interactant>
    <interactant intactId="EBI-352986">
        <id>P52597</id>
        <label>HNRNPF</label>
    </interactant>
    <organismsDiffer>false</organismsDiffer>
    <experiments>3</experiments>
</comment>
<comment type="interaction">
    <interactant intactId="EBI-25884072">
        <id>P62937-2</id>
    </interactant>
    <interactant intactId="EBI-713450">
        <id>Q02363</id>
        <label>ID2</label>
    </interactant>
    <organismsDiffer>false</organismsDiffer>
    <experiments>3</experiments>
</comment>
<comment type="interaction">
    <interactant intactId="EBI-25884072">
        <id>P62937-2</id>
    </interactant>
    <interactant intactId="EBI-743960">
        <id>Q8N5Z5</id>
        <label>KCTD17</label>
    </interactant>
    <organismsDiffer>false</organismsDiffer>
    <experiments>3</experiments>
</comment>
<comment type="interaction">
    <interactant intactId="EBI-25884072">
        <id>P62937-2</id>
    </interactant>
    <interactant intactId="EBI-1043580">
        <id>Q9BRX2</id>
        <label>PELO</label>
    </interactant>
    <organismsDiffer>false</organismsDiffer>
    <experiments>3</experiments>
</comment>
<comment type="interaction">
    <interactant intactId="EBI-25884072">
        <id>P62937-2</id>
    </interactant>
    <interactant intactId="EBI-2803380">
        <id>P07225</id>
        <label>PROS1</label>
    </interactant>
    <organismsDiffer>false</organismsDiffer>
    <experiments>3</experiments>
</comment>
<comment type="interaction">
    <interactant intactId="EBI-25884072">
        <id>P62937-2</id>
    </interactant>
    <interactant intactId="EBI-632715">
        <id>Q13573</id>
        <label>SNW1</label>
    </interactant>
    <organismsDiffer>false</organismsDiffer>
    <experiments>3</experiments>
</comment>
<comment type="interaction">
    <interactant intactId="EBI-25884072">
        <id>P62937-2</id>
    </interactant>
    <interactant intactId="EBI-1167533">
        <id>P56693</id>
        <label>SOX10</label>
    </interactant>
    <organismsDiffer>false</organismsDiffer>
    <experiments>3</experiments>
</comment>
<comment type="interaction">
    <interactant intactId="EBI-25884072">
        <id>P62937-2</id>
    </interactant>
    <interactant intactId="EBI-448878">
        <id>Q13586</id>
        <label>STIM1</label>
    </interactant>
    <organismsDiffer>false</organismsDiffer>
    <experiments>3</experiments>
</comment>
<comment type="interaction">
    <interactant intactId="EBI-25884072">
        <id>P62937-2</id>
    </interactant>
    <interactant intactId="EBI-1053876">
        <id>Q13033-2</id>
        <label>STRN3</label>
    </interactant>
    <organismsDiffer>false</organismsDiffer>
    <experiments>3</experiments>
</comment>
<comment type="interaction">
    <interactant intactId="EBI-25884072">
        <id>P62937-2</id>
    </interactant>
    <interactant intactId="EBI-533224">
        <id>P15884</id>
        <label>TCF4</label>
    </interactant>
    <organismsDiffer>false</organismsDiffer>
    <experiments>3</experiments>
</comment>
<comment type="interaction">
    <interactant intactId="EBI-25884072">
        <id>P62937-2</id>
    </interactant>
    <interactant intactId="EBI-1390168">
        <id>Q9H8H3</id>
        <label>TMT1A</label>
    </interactant>
    <organismsDiffer>false</organismsDiffer>
    <experiments>3</experiments>
</comment>
<comment type="interaction">
    <interactant intactId="EBI-25884072">
        <id>P62937-2</id>
    </interactant>
    <interactant intactId="EBI-934061">
        <id>Q9UJA5</id>
        <label>TRMT6</label>
    </interactant>
    <organismsDiffer>false</organismsDiffer>
    <experiments>3</experiments>
</comment>
<comment type="interaction">
    <interactant intactId="EBI-25884072">
        <id>P62937-2</id>
    </interactant>
    <interactant intactId="EBI-12040603">
        <id>Q9NZC7-5</id>
        <label>WWOX</label>
    </interactant>
    <organismsDiffer>false</organismsDiffer>
    <experiments>3</experiments>
</comment>
<comment type="interaction">
    <interactant intactId="EBI-25884072">
        <id>P62937-2</id>
    </interactant>
    <interactant intactId="EBI-14104088">
        <id>Q53FD0-2</id>
        <label>ZC2HC1C</label>
    </interactant>
    <organismsDiffer>false</organismsDiffer>
    <experiments>3</experiments>
</comment>
<comment type="interaction">
    <interactant intactId="EBI-25884072">
        <id>P62937-2</id>
    </interactant>
    <interactant intactId="EBI-2602314">
        <id>Q15776</id>
        <label>ZKSCAN8</label>
    </interactant>
    <organismsDiffer>false</organismsDiffer>
    <experiments>3</experiments>
</comment>
<comment type="interaction">
    <interactant intactId="EBI-25884072">
        <id>P62937-2</id>
    </interactant>
    <interactant intactId="EBI-12010736">
        <id>Q8N0Y2-2</id>
        <label>ZNF444</label>
    </interactant>
    <organismsDiffer>false</organismsDiffer>
    <experiments>3</experiments>
</comment>
<comment type="interaction">
    <interactant intactId="EBI-25884072">
        <id>P62937-2</id>
    </interactant>
    <interactant intactId="EBI-751531">
        <id>O15535</id>
        <label>ZSCAN9</label>
    </interactant>
    <organismsDiffer>false</organismsDiffer>
    <experiments>3</experiments>
</comment>
<comment type="subcellular location">
    <subcellularLocation>
        <location evidence="23">Cytoplasm</location>
    </subcellularLocation>
    <subcellularLocation>
        <location evidence="11">Secreted</location>
    </subcellularLocation>
    <subcellularLocation>
        <location evidence="22">Nucleus</location>
    </subcellularLocation>
    <text evidence="11">Secretion occurs in response to oxidative stress in vascular smooth muscle through a vesicular secretory pathway that includes Rho GTPase signaling, actin remodeling, and myosin II activation.</text>
</comment>
<comment type="alternative products">
    <event type="alternative splicing"/>
    <isoform>
        <id>P62937-1</id>
        <name>1</name>
        <sequence type="displayed"/>
    </isoform>
    <isoform>
        <id>P62937-2</id>
        <name>2</name>
        <sequence type="described" ref="VSP_056050"/>
    </isoform>
</comment>
<comment type="PTM">
    <text evidence="15 22 29">Acetylation at Lys-125 markedly inhibits catalysis of cis to trans isomerization and stabilizes cis rather than trans forms of the HIV-1 capsid. PPIA acetylation also antagonizes the immunosuppressive effects of cyclosporine by inhibiting the sequential steps of cyclosporine binding and calcineurin inhibition (PubMed:20364129, Ref.12). Acetylation at Lys-125 favors its interaction with TARDBP (PubMed:25678563).</text>
</comment>
<comment type="similarity">
    <text evidence="32">Belongs to the cyclophilin-type PPIase family. PPIase A subfamily.</text>
</comment>
<comment type="online information" name="Wikipedia">
    <link uri="https://en.wikipedia.org/wiki/Cyclophilin"/>
    <text>Cyclophilin entry</text>
</comment>
<name>PPIA_HUMAN</name>
<evidence type="ECO:0000250" key="1">
    <source>
        <dbReference type="UniProtKB" id="P17742"/>
    </source>
</evidence>
<evidence type="ECO:0000255" key="2"/>
<evidence type="ECO:0000255" key="3">
    <source>
        <dbReference type="PROSITE-ProRule" id="PRU00156"/>
    </source>
</evidence>
<evidence type="ECO:0000269" key="4">
    <source>
    </source>
</evidence>
<evidence type="ECO:0000269" key="5">
    <source>
    </source>
</evidence>
<evidence type="ECO:0000269" key="6">
    <source>
    </source>
</evidence>
<evidence type="ECO:0000269" key="7">
    <source>
    </source>
</evidence>
<evidence type="ECO:0000269" key="8">
    <source>
    </source>
</evidence>
<evidence type="ECO:0000269" key="9">
    <source>
    </source>
</evidence>
<evidence type="ECO:0000269" key="10">
    <source>
    </source>
</evidence>
<evidence type="ECO:0000269" key="11">
    <source>
    </source>
</evidence>
<evidence type="ECO:0000269" key="12">
    <source>
    </source>
</evidence>
<evidence type="ECO:0000269" key="13">
    <source>
    </source>
</evidence>
<evidence type="ECO:0000269" key="14">
    <source>
    </source>
</evidence>
<evidence type="ECO:0000269" key="15">
    <source>
    </source>
</evidence>
<evidence type="ECO:0000269" key="16">
    <source>
    </source>
</evidence>
<evidence type="ECO:0000269" key="17">
    <source>
    </source>
</evidence>
<evidence type="ECO:0000269" key="18">
    <source>
    </source>
</evidence>
<evidence type="ECO:0000269" key="19">
    <source>
    </source>
</evidence>
<evidence type="ECO:0000269" key="20">
    <source>
    </source>
</evidence>
<evidence type="ECO:0000269" key="21">
    <source>
    </source>
</evidence>
<evidence type="ECO:0000269" key="22">
    <source>
    </source>
</evidence>
<evidence type="ECO:0000269" key="23">
    <source>
    </source>
</evidence>
<evidence type="ECO:0000269" key="24">
    <source>
    </source>
</evidence>
<evidence type="ECO:0000269" key="25">
    <source>
    </source>
</evidence>
<evidence type="ECO:0000269" key="26">
    <source>
    </source>
</evidence>
<evidence type="ECO:0000269" key="27">
    <source>
    </source>
</evidence>
<evidence type="ECO:0000269" key="28">
    <source ref="11"/>
</evidence>
<evidence type="ECO:0000269" key="29">
    <source ref="12"/>
</evidence>
<evidence type="ECO:0000303" key="30">
    <source>
    </source>
</evidence>
<evidence type="ECO:0000303" key="31">
    <source>
    </source>
</evidence>
<evidence type="ECO:0000305" key="32"/>
<evidence type="ECO:0000305" key="33">
    <source>
    </source>
</evidence>
<evidence type="ECO:0000305" key="34">
    <source>
    </source>
</evidence>
<evidence type="ECO:0007744" key="35">
    <source>
    </source>
</evidence>
<evidence type="ECO:0007744" key="36">
    <source>
    </source>
</evidence>
<evidence type="ECO:0007744" key="37">
    <source>
    </source>
</evidence>
<evidence type="ECO:0007744" key="38">
    <source>
    </source>
</evidence>
<evidence type="ECO:0007744" key="39">
    <source>
    </source>
</evidence>
<evidence type="ECO:0007744" key="40">
    <source>
    </source>
</evidence>
<evidence type="ECO:0007744" key="41">
    <source>
    </source>
</evidence>
<evidence type="ECO:0007744" key="42">
    <source>
    </source>
</evidence>
<evidence type="ECO:0007829" key="43">
    <source>
        <dbReference type="PDB" id="2MS4"/>
    </source>
</evidence>
<evidence type="ECO:0007829" key="44">
    <source>
        <dbReference type="PDB" id="4N1M"/>
    </source>
</evidence>
<evidence type="ECO:0007829" key="45">
    <source>
        <dbReference type="PDB" id="4YUI"/>
    </source>
</evidence>
<evidence type="ECO:0007829" key="46">
    <source>
        <dbReference type="PDB" id="6I42"/>
    </source>
</evidence>
<evidence type="ECO:0007829" key="47">
    <source>
        <dbReference type="PDB" id="7ABT"/>
    </source>
</evidence>
<evidence type="ECO:0007829" key="48">
    <source>
        <dbReference type="PDB" id="7UXN"/>
    </source>
</evidence>